<gene>
    <name type="primary">SORL1</name>
    <name type="synonym">C11orf32</name>
</gene>
<sequence>MATRSSRRESRLPFLFTLVALLPPGALCEVWTQRLHGGSAPLPQDRGFLVVQGDPRELRLWARGDARGASRADEKPLRRKRSAALQPEPIKVYGQVSLNDSHNQMVVHWAGEKSNVIVALARDSLALARPKSSDVYVSYDYGKSFKKISDKLNFGLGNRSEAVIAQFYHSPADNKRYIFADAYAQYLWITFDFCNTLQGFSIPFRAADLLLHSKASNLLLGFDRSHPNKQLWKSDDFGQTWIMIQEHVKSFSWGIDPYDKPNTIYIERHEPSGYSTVFRSTDFFQSRENQEVILEEVRDFQLRDKYMFATKVVHLLGSEQQSSVQLWVSFGRKPMRAAQFVTRHPINEYYIADASEDQVFVCVSHSNNRTNLYISEAEGLKFSLSLENVLYYSPGGAGSDTLVRYFANEPFADFHRVEGLQGVYIATLINGSMNEENMRSVITFDKGGTWEFLQAPAFTGYGEKINCELSQGCSLHLAQRLSQLLNLQLRRMPILSKESAPGLIIATGSVGKNLASKTNVYISSSAGARWREALPGPHYYTWGDHGGIITAIAQGMETNELKYSTNEGETWKTFIFSEKPVFVYGLLTEPGEKSTVFTIFGSNKENVHSWLILQVNATDALGVPCTENDYKLWSPSDERGNECLLGHKTVFKRRTPHATCFNGEDFDRPVVVSNCSCTREDYECDFGFKMSEDLSLEVCVPDPEFSGKSYSPPVPCPVGSTYRRTRGYRKISGDTCSGGDVEARLEGELVPCPLAEENEFILYAVRKSIYRYDLASGATEQLPLTGLRAAVALDFDYEHNCLYWSDLALDVIQRLCLNGSTGQEVIINSGLETVEALAFEPLSQLLYWVDAGFKKIEVANPDGDFRLTIVNSSVLDRPRALVLVPQEGVMFWTDWGDLKPGIYRSNMDGSAAYHLVSEDVKWPNGISVDDQWIYWTDAYLECIERITFSGQQRSVILDNLPHPYAIAVFKNEIYWDDWSQLSIFRASKYSGSQMEILANQLTGLMDMKIFYKGKNTGSNACVPRPCSLLCLPKANNSRSCRCPEDVSSSVLPSGDLMCDCPQGYQLKNNTCVKQENTCLRNQYRCSNGNCINSIWWCDFDNDCGDMSDERNCPTTICDLDTQFRCQESGTCIPLSYKCDLEDDCGDNSDESHCEMHQCRSDEYNCSSGMCIRSSWVCDGDNDCRDWSDEANCTAIYHTCEASNFQCRNGHCIPQRWACDGDTDCQDGSDEDPVNCEKKCNGFRCPNGTCIPSSKHCDGLRDCSDGSDEQHCEPLCTHFMDFVCKNRQQCLFHSMVCDGIIQCRDGSDEDAAFAGCSQDPEFHKVCDEFGFQCQNGVCISLIWKCDGMDDCGDYSDEANCENPTEAPNCSRYFQFRCENGHCIPNRWKCDRENDCGDWSDEKDCGDSHILPFSTPGPSTCLPNYYRCSSGTCVMDTWVCDGYRDCADGSDEEACPLLANVTAASTPTQLGRCDRFEFECHQPKTCIPNWKRCDGHQDCQDGRDEANCPTHSTLTCMSREFQCEDGEACIVLSERCDGFLDCSDESDEKACSDELTVYKVQNLQWTADFSGDVTLTWMRPKKMPSASCVYNVYYRVVGESIWKTLETHSNKTNTVLKVLKPDTTYQVKVQVQCLSKAHNTNDFVTLRTPEGLPDAPRNLQLSLPREAEGVIVGHWAPPIHTHGLIREYIVEYSRSGSKMWASQRAASNFTEIKNLLVNTLYTVRVAAVTSRGIGNWSDSKSITTIKGKVIPPPDIHIDSYGENYLSFTLTMESDIKVNGYVVNLFWAFDTHKQERRTLNFRGSILSHKVGNLTAHTSYEISAWAKTDLGDSPLAFEHVMTRGVRPPAPSLKAKAINQTAVECTWTGPRNVVYGIFYATSFLDLYRNPKSLTTSLHNKTVIVSKDEQYLFLVRVVVPYQGPSSDYVVVKMIPDSRLPPRHLHVVHTGKTSVVIKWESPYDSPDQDLLYAVAVKDLIRKTDRSYKVKSRNSTVEYTLNKLEPGGKYHIIVQLGNMSKDSSIKITTVSLSAPDALKIITENDHVLLFWKSLALKEKHFNESRGYEIHMFDSAMNITAYLGNTTDNFFKISNLKMGHNYTFTVQARCLFGNQICGEPAILLYDELGSGADASATQAARSTDVAAVVVPILFLILLSLGVGFAILYTKHRRLQSSFTAFANSHYSSRLGSAIFSSGDDLGEDDEDAPMITGFSDDVPMVIA</sequence>
<proteinExistence type="evidence at protein level"/>
<feature type="signal peptide" evidence="3">
    <location>
        <begin position="1"/>
        <end position="28"/>
    </location>
</feature>
<feature type="propeptide" id="PRO_0000033164" description="Removed in mature form" evidence="43">
    <location>
        <begin position="29"/>
        <end position="81"/>
    </location>
</feature>
<feature type="chain" id="PRO_0000033165" description="Sortilin-related receptor">
    <location>
        <begin position="82"/>
        <end position="2214"/>
    </location>
</feature>
<feature type="topological domain" description="Lumenal" evidence="3">
    <location>
        <begin position="82"/>
        <end position="2137"/>
    </location>
</feature>
<feature type="transmembrane region" description="Helical" evidence="3">
    <location>
        <begin position="2138"/>
        <end position="2158"/>
    </location>
</feature>
<feature type="topological domain" description="Cytoplasmic" evidence="3">
    <location>
        <begin position="2159"/>
        <end position="2214"/>
    </location>
</feature>
<feature type="repeat" description="BNR 1">
    <location>
        <begin position="136"/>
        <end position="147"/>
    </location>
</feature>
<feature type="repeat" description="BNR 2">
    <location>
        <begin position="232"/>
        <end position="243"/>
    </location>
</feature>
<feature type="repeat" description="BNR 3">
    <location>
        <begin position="441"/>
        <end position="452"/>
    </location>
</feature>
<feature type="repeat" description="BNR 4">
    <location>
        <begin position="521"/>
        <end position="532"/>
    </location>
</feature>
<feature type="repeat" description="BNR 5">
    <location>
        <begin position="562"/>
        <end position="573"/>
    </location>
</feature>
<feature type="repeat" description="LDL-receptor class B 1">
    <location>
        <begin position="800"/>
        <end position="843"/>
    </location>
</feature>
<feature type="repeat" description="LDL-receptor class B 2">
    <location>
        <begin position="844"/>
        <end position="887"/>
    </location>
</feature>
<feature type="repeat" description="LDL-receptor class B 3">
    <location>
        <begin position="888"/>
        <end position="932"/>
    </location>
</feature>
<feature type="repeat" description="LDL-receptor class B 4">
    <location>
        <begin position="933"/>
        <end position="970"/>
    </location>
</feature>
<feature type="repeat" description="LDL-receptor class B 5">
    <location>
        <begin position="971"/>
        <end position="1013"/>
    </location>
</feature>
<feature type="domain" description="EGF-like">
    <location>
        <begin position="1026"/>
        <end position="1072"/>
    </location>
</feature>
<feature type="domain" description="LDL-receptor class A 1" evidence="4">
    <location>
        <begin position="1076"/>
        <end position="1114"/>
    </location>
</feature>
<feature type="domain" description="LDL-receptor class A 2" evidence="4">
    <location>
        <begin position="1115"/>
        <end position="1155"/>
    </location>
</feature>
<feature type="domain" description="LDL-receptor class A 3" evidence="4">
    <location>
        <begin position="1156"/>
        <end position="1194"/>
    </location>
</feature>
<feature type="domain" description="LDL-receptor class A 4" evidence="4">
    <location>
        <begin position="1198"/>
        <end position="1236"/>
    </location>
</feature>
<feature type="domain" description="LDL-receptor class A 5" evidence="4">
    <location>
        <begin position="1238"/>
        <end position="1272"/>
    </location>
</feature>
<feature type="domain" description="LDL-receptor class A 6" evidence="4">
    <location>
        <begin position="1273"/>
        <end position="1317"/>
    </location>
</feature>
<feature type="domain" description="LDL-receptor class A 7" evidence="4">
    <location>
        <begin position="1323"/>
        <end position="1361"/>
    </location>
</feature>
<feature type="domain" description="LDL-receptor class A 8" evidence="4">
    <location>
        <begin position="1366"/>
        <end position="1405"/>
    </location>
</feature>
<feature type="domain" description="LDL-receptor class A 9" evidence="4">
    <location>
        <begin position="1417"/>
        <end position="1455"/>
    </location>
</feature>
<feature type="domain" description="LDL-receptor class A 10" evidence="4">
    <location>
        <begin position="1469"/>
        <end position="1508"/>
    </location>
</feature>
<feature type="domain" description="LDL-receptor class A 11" evidence="4">
    <location>
        <begin position="1512"/>
        <end position="1551"/>
    </location>
</feature>
<feature type="domain" description="Fibronectin type-III 1" evidence="5">
    <location>
        <begin position="1557"/>
        <end position="1649"/>
    </location>
</feature>
<feature type="domain" description="Fibronectin type-III 2" evidence="5">
    <location>
        <begin position="1653"/>
        <end position="1745"/>
    </location>
</feature>
<feature type="domain" description="Fibronectin type-III 3" evidence="5">
    <location>
        <begin position="1749"/>
        <end position="1844"/>
    </location>
</feature>
<feature type="domain" description="Fibronectin type-III 4" evidence="5">
    <location>
        <begin position="1843"/>
        <end position="1927"/>
    </location>
</feature>
<feature type="domain" description="Fibronectin type-III 5" evidence="5">
    <location>
        <begin position="1934"/>
        <end position="2029"/>
    </location>
</feature>
<feature type="domain" description="Fibronectin type-III 6" evidence="5">
    <location>
        <begin position="2030"/>
        <end position="2118"/>
    </location>
</feature>
<feature type="region of interest" description="Required for efficient Golgi apparatus - endosome sorting" evidence="20">
    <location>
        <begin position="2190"/>
        <end position="2214"/>
    </location>
</feature>
<feature type="region of interest" description="Required for interaction with GGA1 and GGA2" evidence="8">
    <location>
        <begin position="2201"/>
        <end position="2214"/>
    </location>
</feature>
<feature type="short sequence motif" description="Cell attachment site" evidence="3">
    <location>
        <begin position="63"/>
        <end position="65"/>
    </location>
</feature>
<feature type="short sequence motif" description="Potential nuclear localization signal for the C-terminal fragment generated by PSEN1" evidence="52">
    <location>
        <begin position="2161"/>
        <end position="2164"/>
    </location>
</feature>
<feature type="short sequence motif" description="Endocytosis signal" evidence="3">
    <location>
        <begin position="2172"/>
        <end position="2177"/>
    </location>
</feature>
<feature type="short sequence motif" description="DXXLL motif involved in the interaction with GGA1" evidence="25">
    <location>
        <begin position="2208"/>
        <end position="2212"/>
    </location>
</feature>
<feature type="modified residue" description="Phosphoserine" evidence="53">
    <location>
        <position position="114"/>
    </location>
</feature>
<feature type="modified residue" description="Phosphoserine; by ROCK2" evidence="27">
    <location>
        <position position="2206"/>
    </location>
</feature>
<feature type="glycosylation site" description="N-linked (GlcNAc...) asparagine" evidence="24">
    <location>
        <position position="99"/>
    </location>
</feature>
<feature type="glycosylation site" description="N-linked (GlcNAc...) asparagine" evidence="3">
    <location>
        <position position="158"/>
    </location>
</feature>
<feature type="glycosylation site" description="N-linked (GlcNAc...) asparagine" evidence="3">
    <location>
        <position position="368"/>
    </location>
</feature>
<feature type="glycosylation site" description="N-linked (GlcNAc...) asparagine" evidence="3">
    <location>
        <position position="430"/>
    </location>
</feature>
<feature type="glycosylation site" description="N-linked (GlcNAc...) asparagine" evidence="3">
    <location>
        <position position="616"/>
    </location>
</feature>
<feature type="glycosylation site" description="N-linked (GlcNAc...) asparagine" evidence="3">
    <location>
        <position position="674"/>
    </location>
</feature>
<feature type="glycosylation site" description="N-linked (GlcNAc...) asparagine" evidence="3">
    <location>
        <position position="818"/>
    </location>
</feature>
<feature type="glycosylation site" description="N-linked (GlcNAc...) asparagine" evidence="3">
    <location>
        <position position="871"/>
    </location>
</feature>
<feature type="glycosylation site" description="N-linked (GlcNAc...) asparagine" evidence="3">
    <location>
        <position position="1035"/>
    </location>
</feature>
<feature type="glycosylation site" description="N-linked (GlcNAc...) asparagine" evidence="3">
    <location>
        <position position="1068"/>
    </location>
</feature>
<feature type="glycosylation site" description="N-linked (GlcNAc...) asparagine" evidence="3">
    <location>
        <position position="1164"/>
    </location>
</feature>
<feature type="glycosylation site" description="N-linked (GlcNAc...) asparagine" evidence="3">
    <location>
        <position position="1191"/>
    </location>
</feature>
<feature type="glycosylation site" description="N-linked (GlcNAc...) asparagine" evidence="3">
    <location>
        <position position="1246"/>
    </location>
</feature>
<feature type="glycosylation site" description="N-linked (GlcNAc...) asparagine" evidence="3">
    <location>
        <position position="1367"/>
    </location>
</feature>
<feature type="glycosylation site" description="N-linked (GlcNAc...) asparagine" evidence="3">
    <location>
        <position position="1458"/>
    </location>
</feature>
<feature type="glycosylation site" description="N-linked (GlcNAc...) asparagine" evidence="3">
    <location>
        <position position="1608"/>
    </location>
</feature>
<feature type="glycosylation site" description="N-linked (GlcNAc...) asparagine" evidence="3">
    <location>
        <position position="1706"/>
    </location>
</feature>
<feature type="glycosylation site" description="N-linked (GlcNAc...) asparagine" evidence="24">
    <location>
        <position position="1733"/>
    </location>
</feature>
<feature type="glycosylation site" description="N-linked (GlcNAc...) asparagine" evidence="3">
    <location>
        <position position="1809"/>
    </location>
</feature>
<feature type="glycosylation site" description="N-linked (GlcNAc...) asparagine" evidence="3">
    <location>
        <position position="1854"/>
    </location>
</feature>
<feature type="glycosylation site" description="N-linked (GlcNAc...) asparagine" evidence="3">
    <location>
        <position position="1894"/>
    </location>
</feature>
<feature type="glycosylation site" description="N-linked (GlcNAc...) asparagine" evidence="3">
    <location>
        <position position="1986"/>
    </location>
</feature>
<feature type="glycosylation site" description="N-linked (GlcNAc...) asparagine" evidence="24">
    <location>
        <position position="2010"/>
    </location>
</feature>
<feature type="glycosylation site" description="N-linked (GlcNAc...) asparagine" evidence="3">
    <location>
        <position position="2054"/>
    </location>
</feature>
<feature type="glycosylation site" description="N-linked (GlcNAc...) asparagine" evidence="3">
    <location>
        <position position="2069"/>
    </location>
</feature>
<feature type="glycosylation site" description="N-linked (GlcNAc...) asparagine" evidence="24">
    <location>
        <position position="2076"/>
    </location>
</feature>
<feature type="glycosylation site" description="N-linked (GlcNAc...) asparagine" evidence="24">
    <location>
        <position position="2092"/>
    </location>
</feature>
<feature type="disulfide bond" evidence="4">
    <location>
        <begin position="1078"/>
        <end position="1090"/>
    </location>
</feature>
<feature type="disulfide bond" evidence="4">
    <location>
        <begin position="1085"/>
        <end position="1103"/>
    </location>
</feature>
<feature type="disulfide bond" evidence="4">
    <location>
        <begin position="1097"/>
        <end position="1112"/>
    </location>
</feature>
<feature type="disulfide bond" evidence="4">
    <location>
        <begin position="1117"/>
        <end position="1131"/>
    </location>
</feature>
<feature type="disulfide bond" evidence="4">
    <location>
        <begin position="1125"/>
        <end position="1144"/>
    </location>
</feature>
<feature type="disulfide bond" evidence="4">
    <location>
        <begin position="1138"/>
        <end position="1153"/>
    </location>
</feature>
<feature type="disulfide bond" evidence="4">
    <location>
        <begin position="1158"/>
        <end position="1170"/>
    </location>
</feature>
<feature type="disulfide bond" evidence="4">
    <location>
        <begin position="1165"/>
        <end position="1183"/>
    </location>
</feature>
<feature type="disulfide bond" evidence="4">
    <location>
        <begin position="1177"/>
        <end position="1192"/>
    </location>
</feature>
<feature type="disulfide bond" evidence="4">
    <location>
        <begin position="1199"/>
        <end position="1211"/>
    </location>
</feature>
<feature type="disulfide bond" evidence="4">
    <location>
        <begin position="1206"/>
        <end position="1224"/>
    </location>
</feature>
<feature type="disulfide bond" evidence="4">
    <location>
        <begin position="1218"/>
        <end position="1235"/>
    </location>
</feature>
<feature type="disulfide bond" evidence="4">
    <location>
        <begin position="1239"/>
        <end position="1249"/>
    </location>
</feature>
<feature type="disulfide bond" evidence="4">
    <location>
        <begin position="1244"/>
        <end position="1262"/>
    </location>
</feature>
<feature type="disulfide bond" evidence="4">
    <location>
        <begin position="1256"/>
        <end position="1271"/>
    </location>
</feature>
<feature type="disulfide bond" evidence="4">
    <location>
        <begin position="1275"/>
        <end position="1289"/>
    </location>
</feature>
<feature type="disulfide bond" evidence="4">
    <location>
        <begin position="1283"/>
        <end position="1302"/>
    </location>
</feature>
<feature type="disulfide bond" evidence="4">
    <location>
        <begin position="1296"/>
        <end position="1315"/>
    </location>
</feature>
<feature type="disulfide bond" evidence="4">
    <location>
        <begin position="1325"/>
        <end position="1337"/>
    </location>
</feature>
<feature type="disulfide bond" evidence="4">
    <location>
        <begin position="1332"/>
        <end position="1350"/>
    </location>
</feature>
<feature type="disulfide bond" evidence="4">
    <location>
        <begin position="1344"/>
        <end position="1359"/>
    </location>
</feature>
<feature type="disulfide bond" evidence="4">
    <location>
        <begin position="1368"/>
        <end position="1381"/>
    </location>
</feature>
<feature type="disulfide bond" evidence="4">
    <location>
        <begin position="1376"/>
        <end position="1394"/>
    </location>
</feature>
<feature type="disulfide bond" evidence="4">
    <location>
        <begin position="1388"/>
        <end position="1403"/>
    </location>
</feature>
<feature type="disulfide bond" evidence="4">
    <location>
        <begin position="1419"/>
        <end position="1431"/>
    </location>
</feature>
<feature type="disulfide bond" evidence="4">
    <location>
        <begin position="1426"/>
        <end position="1444"/>
    </location>
</feature>
<feature type="disulfide bond" evidence="4">
    <location>
        <begin position="1438"/>
        <end position="1453"/>
    </location>
</feature>
<feature type="disulfide bond" evidence="4">
    <location>
        <begin position="1471"/>
        <end position="1484"/>
    </location>
</feature>
<feature type="disulfide bond" evidence="4">
    <location>
        <begin position="1478"/>
        <end position="1497"/>
    </location>
</feature>
<feature type="disulfide bond" evidence="4">
    <location>
        <begin position="1491"/>
        <end position="1506"/>
    </location>
</feature>
<feature type="disulfide bond" evidence="4">
    <location>
        <begin position="1514"/>
        <end position="1527"/>
    </location>
</feature>
<feature type="disulfide bond" evidence="4">
    <location>
        <begin position="1521"/>
        <end position="1540"/>
    </location>
</feature>
<feature type="disulfide bond" evidence="4">
    <location>
        <begin position="1534"/>
        <end position="1549"/>
    </location>
</feature>
<feature type="sequence variant" id="VAR_036371" description="In a breast cancer sample; somatic mutation." evidence="18">
    <original>L</original>
    <variation>S</variation>
    <location>
        <position position="120"/>
    </location>
</feature>
<feature type="sequence variant" id="VAR_070012" description="In AD; uncertain significance." evidence="31">
    <original>Y</original>
    <variation>C</variation>
    <location>
        <position position="141"/>
    </location>
</feature>
<feature type="sequence variant" id="VAR_070013" description="In AD; uncertain significance; loss of interaction with APP amyloid-beta peptides, hence reduced turnover of APP amyloid-beta peptides in cells." evidence="31 36">
    <original>G</original>
    <variation>R</variation>
    <location>
        <position position="511"/>
    </location>
</feature>
<feature type="sequence variant" id="VAR_020360" description="In dbSNP:rs2298813." evidence="22">
    <original>A</original>
    <variation>T</variation>
    <location>
        <position position="528"/>
    </location>
</feature>
<feature type="sequence variant" id="VAR_070014" description="In AD; uncertain significance; dbSNP:rs377498269." evidence="31">
    <original>N</original>
    <variation>S</variation>
    <location>
        <position position="924"/>
    </location>
</feature>
<feature type="sequence variant" id="VAR_034508" description="In dbSNP:rs1699107." evidence="13 43 44 45">
    <original>Q</original>
    <variation>E</variation>
    <location>
        <position position="1074"/>
    </location>
</feature>
<feature type="sequence variant" id="VAR_070015" description="In AD; uncertain significance; dbSNP:rs747306346." evidence="31">
    <original>N</original>
    <variation>S</variation>
    <location>
        <position position="1358"/>
    </location>
</feature>
<feature type="sequence variant" id="VAR_036372" description="In a breast cancer sample; somatic mutation." evidence="18">
    <original>M</original>
    <variation>L</variation>
    <location>
        <position position="1581"/>
    </location>
</feature>
<feature type="sequence variant" id="VAR_070016" description="In AD; uncertain significance; dbSNP:rs1565352546." evidence="31">
    <original>G</original>
    <variation>D</variation>
    <location>
        <position position="1681"/>
    </location>
</feature>
<feature type="sequence variant" id="VAR_034509" description="In dbSNP:rs1792120." evidence="13 43 44 45">
    <original>V</original>
    <variation>I</variation>
    <location>
        <position position="1967"/>
    </location>
</feature>
<feature type="sequence variant" id="VAR_036373" description="In a colorectal cancer sample; somatic mutation; dbSNP:rs766895956." evidence="18">
    <original>L</original>
    <variation>V</variation>
    <location>
        <position position="1972"/>
    </location>
</feature>
<feature type="mutagenesis site" description="Loss of propeptide cleavage." evidence="7">
    <original>RRKR</original>
    <variation>GRKG</variation>
    <location>
        <begin position="78"/>
        <end position="81"/>
    </location>
</feature>
<feature type="mutagenesis site" description="Affects the nuclear location of the C-terminal fragment generated by PSEN1." evidence="17">
    <original>RR</original>
    <variation>AA</variation>
    <location>
        <begin position="2163"/>
        <end position="2164"/>
    </location>
</feature>
<feature type="mutagenesis site" description="No effect on endocytosis." evidence="20">
    <original>FANSHY</original>
    <variation>AAASHA</variation>
    <location>
        <begin position="2172"/>
        <end position="2177"/>
    </location>
</feature>
<feature type="mutagenesis site" description="Strong reduction in Golgi apparatus - endosome sorting. Loss of interaction with AP-1 complex." evidence="20">
    <location>
        <begin position="2190"/>
        <end position="2214"/>
    </location>
</feature>
<feature type="mutagenesis site" description="Loss of interaction with GGA1 and PACS1. No effect on interaction with APP. Affects subcellular location, increasing localization at the cell surface, possibly due to drastically decreased endocytosis. Impaired Golgi apparatus - endosome sorting. Increased amyloidogenic APP processing by beta-secretase, resulting in increased levels of soluble APP-beta and amyloid-beta protein 40 and 42. Loss of APOA5 internalization." evidence="20 21 23">
    <original>DDLGEDDED</original>
    <variation>AALGAAAAA</variation>
    <location>
        <begin position="2190"/>
        <end position="2198"/>
    </location>
</feature>
<feature type="mutagenesis site" description="No effect on the interaction with HSPA12A." evidence="41">
    <original>DD</original>
    <variation>AA</variation>
    <location>
        <begin position="2190"/>
        <end position="2191"/>
    </location>
</feature>
<feature type="mutagenesis site" description="Strong decrease in interaction with HSPA12A." evidence="41">
    <original>EDDED</original>
    <variation>AAAAA</variation>
    <location>
        <begin position="2194"/>
        <end position="2198"/>
    </location>
</feature>
<feature type="mutagenesis site" description="No effect on endocytosis. Decreased Golgi apparatus - endosome sorting." evidence="20">
    <original>MI</original>
    <variation>AA</variation>
    <location>
        <begin position="2201"/>
        <end position="2202"/>
    </location>
</feature>
<feature type="mutagenesis site" description="No effect on the interaction with HSPA12A." evidence="41">
    <original>TG</original>
    <variation>AA</variation>
    <location>
        <begin position="2203"/>
        <end position="2204"/>
    </location>
</feature>
<feature type="mutagenesis site" description="No effect on the interaction with HSPA12A." evidence="41">
    <original>FS</original>
    <variation>AA</variation>
    <location>
        <begin position="2205"/>
        <end position="2206"/>
    </location>
</feature>
<feature type="mutagenesis site" description="Strong decrease in interaction with HSPA12A." evidence="41">
    <original>DD</original>
    <variation>AA</variation>
    <location>
        <begin position="2207"/>
        <end position="2208"/>
    </location>
</feature>
<feature type="mutagenesis site" description="Loss of interaction with GGA1 and PACS1. No effect on interaction with APP. Affects subcellular location, by causing increased localization to recycling endosomes. Increased APP processing by alpha-secretase, resulting in increased levels of soluble APP-alpha and C83 APP fragments. Decreased APP processing by beta-secretase, resulting in reduced levels of C99 APP fragment." evidence="21">
    <original>DVPM</original>
    <variation>AVPA</variation>
    <location>
        <begin position="2208"/>
        <end position="2211"/>
    </location>
</feature>
<feature type="mutagenesis site" description="No effect on the interaction with HSPA12A." evidence="41">
    <original>VP</original>
    <variation>AA</variation>
    <location>
        <begin position="2209"/>
        <end position="2210"/>
    </location>
</feature>
<feature type="mutagenesis site" description="No effect on endocytosis. Affects LPL sorting to endosomes." evidence="20 29">
    <location>
        <begin position="2211"/>
        <end position="2214"/>
    </location>
</feature>
<feature type="strand" evidence="56">
    <location>
        <begin position="48"/>
        <end position="51"/>
    </location>
</feature>
<feature type="strand" evidence="55">
    <location>
        <begin position="91"/>
        <end position="98"/>
    </location>
</feature>
<feature type="strand" evidence="55">
    <location>
        <begin position="103"/>
        <end position="109"/>
    </location>
</feature>
<feature type="strand" evidence="55">
    <location>
        <begin position="117"/>
        <end position="122"/>
    </location>
</feature>
<feature type="strand" evidence="56">
    <location>
        <begin position="125"/>
        <end position="128"/>
    </location>
</feature>
<feature type="strand" evidence="55">
    <location>
        <begin position="133"/>
        <end position="140"/>
    </location>
</feature>
<feature type="strand" evidence="56">
    <location>
        <begin position="145"/>
        <end position="147"/>
    </location>
</feature>
<feature type="helix" evidence="55">
    <location>
        <begin position="149"/>
        <end position="151"/>
    </location>
</feature>
<feature type="strand" evidence="55">
    <location>
        <begin position="164"/>
        <end position="169"/>
    </location>
</feature>
<feature type="strand" evidence="55">
    <location>
        <begin position="177"/>
        <end position="192"/>
    </location>
</feature>
<feature type="strand" evidence="55">
    <location>
        <begin position="198"/>
        <end position="201"/>
    </location>
</feature>
<feature type="strand" evidence="55">
    <location>
        <begin position="207"/>
        <end position="211"/>
    </location>
</feature>
<feature type="strand" evidence="55">
    <location>
        <begin position="219"/>
        <end position="223"/>
    </location>
</feature>
<feature type="strand" evidence="55">
    <location>
        <begin position="230"/>
        <end position="236"/>
    </location>
</feature>
<feature type="strand" evidence="55">
    <location>
        <begin position="242"/>
        <end position="253"/>
    </location>
</feature>
<feature type="turn" evidence="55">
    <location>
        <begin position="256"/>
        <end position="258"/>
    </location>
</feature>
<feature type="strand" evidence="55">
    <location>
        <begin position="264"/>
        <end position="268"/>
    </location>
</feature>
<feature type="strand" evidence="56">
    <location>
        <begin position="271"/>
        <end position="273"/>
    </location>
</feature>
<feature type="strand" evidence="55">
    <location>
        <begin position="275"/>
        <end position="282"/>
    </location>
</feature>
<feature type="helix" evidence="55">
    <location>
        <begin position="287"/>
        <end position="289"/>
    </location>
</feature>
<feature type="strand" evidence="55">
    <location>
        <begin position="290"/>
        <end position="298"/>
    </location>
</feature>
<feature type="strand" evidence="55">
    <location>
        <begin position="300"/>
        <end position="303"/>
    </location>
</feature>
<feature type="strand" evidence="55">
    <location>
        <begin position="306"/>
        <end position="313"/>
    </location>
</feature>
<feature type="strand" evidence="56">
    <location>
        <begin position="318"/>
        <end position="320"/>
    </location>
</feature>
<feature type="strand" evidence="55">
    <location>
        <begin position="323"/>
        <end position="330"/>
    </location>
</feature>
<feature type="strand" evidence="57">
    <location>
        <begin position="333"/>
        <end position="337"/>
    </location>
</feature>
<feature type="strand" evidence="55">
    <location>
        <begin position="349"/>
        <end position="353"/>
    </location>
</feature>
<feature type="strand" evidence="55">
    <location>
        <begin position="355"/>
        <end position="358"/>
    </location>
</feature>
<feature type="strand" evidence="55">
    <location>
        <begin position="360"/>
        <end position="363"/>
    </location>
</feature>
<feature type="helix" evidence="55">
    <location>
        <begin position="366"/>
        <end position="368"/>
    </location>
</feature>
<feature type="strand" evidence="55">
    <location>
        <begin position="369"/>
        <end position="374"/>
    </location>
</feature>
<feature type="strand" evidence="58">
    <location>
        <begin position="377"/>
        <end position="379"/>
    </location>
</feature>
<feature type="strand" evidence="55">
    <location>
        <begin position="383"/>
        <end position="391"/>
    </location>
</feature>
<feature type="strand" evidence="56">
    <location>
        <begin position="394"/>
        <end position="396"/>
    </location>
</feature>
<feature type="turn" evidence="56">
    <location>
        <begin position="397"/>
        <end position="400"/>
    </location>
</feature>
<feature type="helix" evidence="56">
    <location>
        <begin position="402"/>
        <end position="405"/>
    </location>
</feature>
<feature type="strand" evidence="58">
    <location>
        <begin position="407"/>
        <end position="409"/>
    </location>
</feature>
<feature type="strand" evidence="55">
    <location>
        <begin position="411"/>
        <end position="416"/>
    </location>
</feature>
<feature type="strand" evidence="55">
    <location>
        <begin position="420"/>
        <end position="422"/>
    </location>
</feature>
<feature type="strand" evidence="55">
    <location>
        <begin position="424"/>
        <end position="428"/>
    </location>
</feature>
<feature type="strand" evidence="56">
    <location>
        <begin position="431"/>
        <end position="434"/>
    </location>
</feature>
<feature type="helix" evidence="56">
    <location>
        <begin position="435"/>
        <end position="437"/>
    </location>
</feature>
<feature type="strand" evidence="55">
    <location>
        <begin position="439"/>
        <end position="445"/>
    </location>
</feature>
<feature type="strand" evidence="56">
    <location>
        <begin position="451"/>
        <end position="453"/>
    </location>
</feature>
<feature type="strand" evidence="56">
    <location>
        <begin position="460"/>
        <end position="462"/>
    </location>
</feature>
<feature type="helix" evidence="56">
    <location>
        <begin position="469"/>
        <end position="471"/>
    </location>
</feature>
<feature type="strand" evidence="55">
    <location>
        <begin position="473"/>
        <end position="479"/>
    </location>
</feature>
<feature type="helix" evidence="56">
    <location>
        <begin position="480"/>
        <end position="485"/>
    </location>
</feature>
<feature type="strand" evidence="58">
    <location>
        <begin position="488"/>
        <end position="490"/>
    </location>
</feature>
<feature type="strand" evidence="55">
    <location>
        <begin position="492"/>
        <end position="495"/>
    </location>
</feature>
<feature type="strand" evidence="58">
    <location>
        <begin position="498"/>
        <end position="500"/>
    </location>
</feature>
<feature type="strand" evidence="55">
    <location>
        <begin position="504"/>
        <end position="510"/>
    </location>
</feature>
<feature type="strand" evidence="58">
    <location>
        <begin position="512"/>
        <end position="514"/>
    </location>
</feature>
<feature type="strand" evidence="55">
    <location>
        <begin position="519"/>
        <end position="525"/>
    </location>
</feature>
<feature type="strand" evidence="58">
    <location>
        <begin position="528"/>
        <end position="530"/>
    </location>
</feature>
<feature type="strand" evidence="55">
    <location>
        <begin position="531"/>
        <end position="536"/>
    </location>
</feature>
<feature type="strand" evidence="55">
    <location>
        <begin position="538"/>
        <end position="543"/>
    </location>
</feature>
<feature type="helix" evidence="55">
    <location>
        <begin position="544"/>
        <end position="546"/>
    </location>
</feature>
<feature type="strand" evidence="55">
    <location>
        <begin position="548"/>
        <end position="553"/>
    </location>
</feature>
<feature type="strand" evidence="55">
    <location>
        <begin position="560"/>
        <end position="566"/>
    </location>
</feature>
<feature type="strand" evidence="55">
    <location>
        <begin position="572"/>
        <end position="575"/>
    </location>
</feature>
<feature type="strand" evidence="56">
    <location>
        <begin position="577"/>
        <end position="579"/>
    </location>
</feature>
<feature type="strand" evidence="55">
    <location>
        <begin position="581"/>
        <end position="588"/>
    </location>
</feature>
<feature type="strand" evidence="58">
    <location>
        <begin position="590"/>
        <end position="592"/>
    </location>
</feature>
<feature type="strand" evidence="55">
    <location>
        <begin position="596"/>
        <end position="602"/>
    </location>
</feature>
<feature type="turn" evidence="57">
    <location>
        <begin position="604"/>
        <end position="607"/>
    </location>
</feature>
<feature type="strand" evidence="55">
    <location>
        <begin position="610"/>
        <end position="616"/>
    </location>
</feature>
<feature type="helix" evidence="55">
    <location>
        <begin position="618"/>
        <end position="621"/>
    </location>
</feature>
<feature type="helix" evidence="55">
    <location>
        <begin position="627"/>
        <end position="629"/>
    </location>
</feature>
<feature type="strand" evidence="55">
    <location>
        <begin position="630"/>
        <end position="633"/>
    </location>
</feature>
<feature type="helix" evidence="56">
    <location>
        <begin position="635"/>
        <end position="637"/>
    </location>
</feature>
<feature type="turn" evidence="56">
    <location>
        <begin position="638"/>
        <end position="641"/>
    </location>
</feature>
<feature type="strand" evidence="55">
    <location>
        <begin position="647"/>
        <end position="654"/>
    </location>
</feature>
<feature type="strand" evidence="55">
    <location>
        <begin position="670"/>
        <end position="674"/>
    </location>
</feature>
<feature type="helix" evidence="55">
    <location>
        <begin position="679"/>
        <end position="681"/>
    </location>
</feature>
<feature type="strand" evidence="55">
    <location>
        <begin position="682"/>
        <end position="684"/>
    </location>
</feature>
<feature type="strand" evidence="55">
    <location>
        <begin position="688"/>
        <end position="690"/>
    </location>
</feature>
<feature type="helix" evidence="55">
    <location>
        <begin position="694"/>
        <end position="696"/>
    </location>
</feature>
<feature type="strand" evidence="55">
    <location>
        <begin position="699"/>
        <end position="701"/>
    </location>
</feature>
<feature type="helix" evidence="55">
    <location>
        <begin position="703"/>
        <end position="705"/>
    </location>
</feature>
<feature type="strand" evidence="55">
    <location>
        <begin position="722"/>
        <end position="724"/>
    </location>
</feature>
<feature type="strand" evidence="55">
    <location>
        <begin position="727"/>
        <end position="730"/>
    </location>
</feature>
<feature type="turn" evidence="55">
    <location>
        <begin position="740"/>
        <end position="745"/>
    </location>
</feature>
<feature type="strand" evidence="55">
    <location>
        <begin position="748"/>
        <end position="750"/>
    </location>
</feature>
<feature type="strand" evidence="54">
    <location>
        <begin position="1655"/>
        <end position="1660"/>
    </location>
</feature>
<feature type="strand" evidence="54">
    <location>
        <begin position="1669"/>
        <end position="1674"/>
    </location>
</feature>
<feature type="strand" evidence="54">
    <location>
        <begin position="1683"/>
        <end position="1692"/>
    </location>
</feature>
<feature type="strand" evidence="54">
    <location>
        <begin position="1699"/>
        <end position="1710"/>
    </location>
</feature>
<feature type="strand" evidence="54">
    <location>
        <begin position="1718"/>
        <end position="1729"/>
    </location>
</feature>
<feature type="strand" evidence="54">
    <location>
        <begin position="1731"/>
        <end position="1734"/>
    </location>
</feature>
<feature type="strand" evidence="54">
    <location>
        <begin position="1738"/>
        <end position="1741"/>
    </location>
</feature>
<evidence type="ECO:0000250" key="1">
    <source>
        <dbReference type="UniProtKB" id="O88307"/>
    </source>
</evidence>
<evidence type="ECO:0000250" key="2">
    <source>
        <dbReference type="UniProtKB" id="Q95209"/>
    </source>
</evidence>
<evidence type="ECO:0000255" key="3"/>
<evidence type="ECO:0000255" key="4">
    <source>
        <dbReference type="PROSITE-ProRule" id="PRU00124"/>
    </source>
</evidence>
<evidence type="ECO:0000255" key="5">
    <source>
        <dbReference type="PROSITE-ProRule" id="PRU00316"/>
    </source>
</evidence>
<evidence type="ECO:0000269" key="6">
    <source>
    </source>
</evidence>
<evidence type="ECO:0000269" key="7">
    <source>
    </source>
</evidence>
<evidence type="ECO:0000269" key="8">
    <source>
    </source>
</evidence>
<evidence type="ECO:0000269" key="9">
    <source>
    </source>
</evidence>
<evidence type="ECO:0000269" key="10">
    <source>
    </source>
</evidence>
<evidence type="ECO:0000269" key="11">
    <source>
    </source>
</evidence>
<evidence type="ECO:0000269" key="12">
    <source>
    </source>
</evidence>
<evidence type="ECO:0000269" key="13">
    <source>
    </source>
</evidence>
<evidence type="ECO:0000269" key="14">
    <source>
    </source>
</evidence>
<evidence type="ECO:0000269" key="15">
    <source>
    </source>
</evidence>
<evidence type="ECO:0000269" key="16">
    <source>
    </source>
</evidence>
<evidence type="ECO:0000269" key="17">
    <source>
    </source>
</evidence>
<evidence type="ECO:0000269" key="18">
    <source>
    </source>
</evidence>
<evidence type="ECO:0000269" key="19">
    <source>
    </source>
</evidence>
<evidence type="ECO:0000269" key="20">
    <source>
    </source>
</evidence>
<evidence type="ECO:0000269" key="21">
    <source>
    </source>
</evidence>
<evidence type="ECO:0000269" key="22">
    <source>
    </source>
</evidence>
<evidence type="ECO:0000269" key="23">
    <source>
    </source>
</evidence>
<evidence type="ECO:0000269" key="24">
    <source>
    </source>
</evidence>
<evidence type="ECO:0000269" key="25">
    <source>
    </source>
</evidence>
<evidence type="ECO:0000269" key="26">
    <source>
    </source>
</evidence>
<evidence type="ECO:0000269" key="27">
    <source>
    </source>
</evidence>
<evidence type="ECO:0000269" key="28">
    <source>
    </source>
</evidence>
<evidence type="ECO:0000269" key="29">
    <source>
    </source>
</evidence>
<evidence type="ECO:0000269" key="30">
    <source>
    </source>
</evidence>
<evidence type="ECO:0000269" key="31">
    <source>
    </source>
</evidence>
<evidence type="ECO:0000269" key="32">
    <source>
    </source>
</evidence>
<evidence type="ECO:0000269" key="33">
    <source>
    </source>
</evidence>
<evidence type="ECO:0000269" key="34">
    <source>
    </source>
</evidence>
<evidence type="ECO:0000269" key="35">
    <source>
    </source>
</evidence>
<evidence type="ECO:0000269" key="36">
    <source>
    </source>
</evidence>
<evidence type="ECO:0000269" key="37">
    <source>
    </source>
</evidence>
<evidence type="ECO:0000269" key="38">
    <source>
    </source>
</evidence>
<evidence type="ECO:0000269" key="39">
    <source>
    </source>
</evidence>
<evidence type="ECO:0000269" key="40">
    <source>
    </source>
</evidence>
<evidence type="ECO:0000269" key="41">
    <source>
    </source>
</evidence>
<evidence type="ECO:0000269" key="42">
    <source>
    </source>
</evidence>
<evidence type="ECO:0000269" key="43">
    <source>
    </source>
</evidence>
<evidence type="ECO:0000269" key="44">
    <source>
    </source>
</evidence>
<evidence type="ECO:0000269" key="45">
    <source ref="4"/>
</evidence>
<evidence type="ECO:0000303" key="46">
    <source>
    </source>
</evidence>
<evidence type="ECO:0000303" key="47">
    <source>
    </source>
</evidence>
<evidence type="ECO:0000303" key="48">
    <source>
    </source>
</evidence>
<evidence type="ECO:0000305" key="49"/>
<evidence type="ECO:0000305" key="50">
    <source>
    </source>
</evidence>
<evidence type="ECO:0000305" key="51">
    <source>
    </source>
</evidence>
<evidence type="ECO:0000305" key="52">
    <source>
    </source>
</evidence>
<evidence type="ECO:0007744" key="53">
    <source>
    </source>
</evidence>
<evidence type="ECO:0007829" key="54">
    <source>
        <dbReference type="PDB" id="2DM4"/>
    </source>
</evidence>
<evidence type="ECO:0007829" key="55">
    <source>
        <dbReference type="PDB" id="3WSX"/>
    </source>
</evidence>
<evidence type="ECO:0007829" key="56">
    <source>
        <dbReference type="PDB" id="3WSY"/>
    </source>
</evidence>
<evidence type="ECO:0007829" key="57">
    <source>
        <dbReference type="PDB" id="3WSZ"/>
    </source>
</evidence>
<evidence type="ECO:0007829" key="58">
    <source>
        <dbReference type="PDB" id="7VT0"/>
    </source>
</evidence>
<comment type="function">
    <text evidence="1 10 14 16 20 21 23 29 30 32 33 35 36 37 38 39 42 49">Sorting receptor that directs several proteins to their correct location within the cell (Probable). Along with AP-1 complex, involved Golgi apparatus - endosome sorting (PubMed:17646382). Sorting receptor for APP, regulating its intracellular trafficking and processing into amyloidogenic-beta peptides. Retains APP in the trans-Golgi network, hence preventing its transit through late endosomes where amyloid beta peptides Abeta40 and Abeta42 are generated (PubMed:16174740, PubMed:16407538, PubMed:17855360, PubMed:24523320). May also sort newly produced amyloid-beta peptides to lysosomes for catabolism (PubMed:24523320). Does not affect APP trafficking from the endoplasmic reticulum to Golgi compartments (PubMed:17855360). Sorting receptor for the BDNF receptor NTRK2/TRKB that facilitates NTRK2 trafficking between synaptic plasma membranes, postsynaptic densities and cell soma, hence positively regulates BDNF signaling by controlling the intracellular location of its receptor (PubMed:23977241). Sorting receptor for GDNF that promotes GDNF regulated, but not constitutive secretion (PubMed:21994944). Sorting receptor for the GDNF-GFRA1 complex, directing it from the cell surface to endosomes. GDNF is then targeted to lysosomes and degraded, while its receptor GFRA1 recycles back to the cell membrane, resulting in a GDNF clearance pathway. The SORL1-GFRA1 complex further targets RET for endocytosis, but not for degradation, affecting GDNF-induced neurotrophic activities (PubMed:23333276). Sorting receptor for ERBB2/HER2. Regulates ERBB2 subcellular distribution by promoting its recycling after internalization from endosomes back to the plasma membrane, hence stimulating phosphoinositide 3-kinase (PI3K)-dependent ERBB2 signaling. In ERBB2-dependent cancer cells, promotes cell proliferation (PubMed:31138794). Sorting receptor for lipoprotein lipase LPL. Promotes LPL localization to endosomes and later to the lysosomes, leading to degradation of newly synthesized LPL (PubMed:21385844). Potential sorting receptor for APOA5, inducing APOA5 internalization to early endosomes, then to late endosomes, wherefrom a portion is sent to lysosomes and degradation, another portion is sorted to the trans-Golgi network (PubMed:18603531). Sorting receptor for the insulin receptor INSR. Promotes recycling of internalized INSR via the Golgi apparatus back to the cell surface, thereby preventing lysosomal INSR catabolism, increasing INSR cell surface expression and strengthening insulin signal reception in adipose tissue. Does not affect INSR internalization (PubMed:27322061). Plays a role in renal ion homeostasis, controlling the phospho-regulation of SLC12A1/NKCC2 by STK39/SPAK kinase and PPP3CB/calcineurin A beta phosphatase, possibly through intracellular sorting of STK39 and PPP3CB (By similarity). Stimulates, via the N-terminal ectodomain, the proliferation and migration of smooth muscle cells, possibly by increasing cell surface expression of the urokinase receptor uPAR/PLAUR. This may promote extracellular matrix proteolysis and hence facilitate cell migration (PubMed:14764453). By acting on the migration of intimal smooth muscle cells, may accelerate intimal thickening following vascular injury (PubMed:14764453). Promotes adhesion of monocytes (PubMed:23486467). Stimulates proliferation and migration of monocytes/macrophages (By similarity). Through its action on intimal smooth muscle cells and macrophages, may accelerate intimal thickening and macrophage foam cell formation in the process of atherosclerosis (By similarity). Regulates hypoxia-enhanced adhesion of hematopoietic stem and progenitor cells to the bone marrow stromal cells via a PLAUR-mediated pathway. This function is mediated by the N-terminal ectodomain (PubMed:23486467). Metabolic regulator, which functions to maintain the adequate balance between lipid storage and oxidation in response to changing environmental conditions, such as temperature and diet. The N-terminal ectodomain negatively regulates adipose tissue energy expenditure, acting through the inhibition the BMP/Smad pathway (By similarity). May regulate signaling by the heterodimeric neurotrophic cytokine CLCF1-CRLF1 bound to the CNTFR receptor by promoting the endocytosis of the tripartite complex CLCF1-CRLF1-CNTFR and lysosomal degradation (PubMed:26858303). May regulate IL6 signaling, decreasing cis signaling, possibly by interfering with IL6-binding to membrane-bound IL6R, while up-regulating trans signaling via soluble IL6R (PubMed:28265003).</text>
</comment>
<comment type="subunit">
    <text evidence="1 2 6 7 8 9 10 11 12 14 15 16 19 20 21 23 25 26 27 29 30 32 33 36 37 38 39 40 41 42 43">After maturation cleavage, interacts (via N-terminus) with its own propeptide; this interaction prevents interaction with other ligands, including CRLF1, GDNF, GFRA1, IL6 and IL6R (PubMed:11294867, PubMed:12530537, PubMed:15364913, PubMed:23333276, PubMed:24523320). Interacts (via N-terminal ectodomain) with APP, forming a 1:1 stoichiometric complex, including with isoforms APP695, APP751 and APP770; this interaction retains APP in the trans-Golgi network and reduces processing into soluble APP-alpha and amyloid-beta peptides (PubMed:16174740, PubMed:16407538, PubMed:17855360, PubMed:24523320). Also interacts with APP C-terminal fragment C99 and with Abeta40 (PubMed:16407538). Interacts with beta-secretase BACE1/BACE; this interaction may affect BACE1-binding to APP and hence reduce BACE1-dependent APP cleavage (PubMed:16407538). Interacts with LRPAP1/RAP (PubMed:11294867, PubMed:12530537, PubMed:14764453, PubMed:15053742, PubMed:15364913, PubMed:26858303, PubMed:8940146). Interacts (via C-terminal cytosolic domain) with GGA1 and GGA2 (via N-terminal VHS domain) (PubMed:11821067, PubMed:17855360, PubMed:20015111, PubMed:30679749). Interacts with PACS1 (PubMed:17646382, PubMed:17855360). May interact (via the N-terminal ectodomain) with the morphogenetic neuropeptide, also called head activator or HA; this interaction is impaired in the presence of propeptide (PubMed:11082041, PubMed:11294867, PubMed:12530537). Interacts with neurotensin/NTS (PubMed:11294867). Interacts (via the N-terminal ectodomain) with PDGFB homodimer (PubMed:15053742, PubMed:16393139). Interacts (via N-terminal ectodomain) with the uPA receptor PLAUR; this interaction decreases PLAUR internalization (PubMed:14764453, PubMed:23486467). Interacts (via N-terminal ectodomain) with uPA/PLAU and PAI1/SERPINE1, either individually or in complex with each other, leading to endocytosis; this interaction is abolished in the presence of LRPAP1 (PubMed:15053742). Also interacts with the ternary complex composed of PLAUR-PLAU-PAI1 (PubMed:15053742). Also interacts with tPA/PLAT either alone or in complex with SERPINE1 (PubMed:15053742). Interacts (via C-terminus) with AP-1 and AP-2 complexes (PubMed:17646382). Interacts with BMPR1A and BMPR1B (By similarity). Interacts with lipoprotein lipase LPL; this interaction is optimal in slightly acidic conditions (PubMed:21385844). Interacts (via N-terminal ectodomain) with GDNF (via propeptide) and GDNF receptor alpha-1/GFRA1, either individually or in complex with each other (PubMed:15364913, PubMed:21994944, PubMed:23333276). The interaction with GDNF occurs mostly intracellularly (PubMed:21994944). Also interacts with other GDNF receptor alpha family members, including GFRA2, GFRA3 and GFRA4 (PubMed:23333276). Interacts with the insulin receptor INSR; this interaction strongly increases the surface exposure of INSR (PubMed:27322061). Interacts (via cytosolic C-terminus) with STK39/SPAK (PubMed:20385770). Interacts (via N-terminal ectodomain) with the heterodimeric complex CRLF1-CLC; within this complex, the interaction is mediated predominantly by the CRLF1 moiety (PubMed:26858303). Interacts with CNTFR, as well as with the tripartite signaling complex formed by CRLF1, CLC and CNTFR (PubMed:26858303). Interacts (via N-terminal ectodomain) with IL6; this interaction leads to IL6 internalization and lysosomal degradation (PubMed:28265003). Binding of SOLRL1 secreted N-terminal ectodomain to IL6 may increase IL6 trans signaling (PubMed:28265003). Interacts with secreted IL6R; this interaction leads to IL6R internalization (PubMed:28265003). Also interacts with transmembrane IL6R; this interaction does not affect IL6R subcellular location (PubMed:28265003). Interacts with APOE (PubMed:30448281). Interacts with apolipoprotein E-rich beta-VLDL (By similarity). Interacts with APOA5; this interaction leads to APOA5 internalization and is abolished by heparin (PubMed:17326667, PubMed:18603531). Interaction with APOA5 results in enhanced binding to chylomicrons (PubMed:17326667). Interacts with ROCK2 (PubMed:21147781). Interacts (via cytosolic C-terminus) with PPP3CB/calcineurin A beta (By similarity). Interacts with NTRK2/TRKB; this interaction facilitates NTRK2 trafficking between synaptic plasma membranes, postsynaptic densities and cell soma, hence positively regulates BDNF signaling (By similarity). Interacts (via cytosolic C-terminus) with HSPA12A in an ADP-dependent manner; this interaction affects SORL1 internalization and subcellular localization (PubMed:30679749). Interacts (via N-terminal ectodomain) with ERBB2/HER2 (PubMed:31138794).</text>
</comment>
<comment type="interaction">
    <interactant intactId="EBI-1171329">
        <id>Q92673</id>
    </interactant>
    <interactant intactId="EBI-77613">
        <id>P05067</id>
        <label>APP</label>
    </interactant>
    <organismsDiffer>false</organismsDiffer>
    <experiments>5</experiments>
</comment>
<comment type="interaction">
    <interactant intactId="EBI-1171329">
        <id>Q92673</id>
    </interactant>
    <interactant intactId="EBI-302641">
        <id>P05067-4</id>
        <label>APP</label>
    </interactant>
    <organismsDiffer>false</organismsDiffer>
    <experiments>8</experiments>
</comment>
<comment type="interaction">
    <interactant intactId="EBI-1171329">
        <id>Q92673</id>
    </interactant>
    <interactant intactId="EBI-3894543">
        <id>PRO_0000000091</id>
        <label>APP</label>
        <dbReference type="UniProtKB" id="P05067"/>
    </interactant>
    <organismsDiffer>false</organismsDiffer>
    <experiments>4</experiments>
</comment>
<comment type="interaction">
    <interactant intactId="EBI-1171329">
        <id>Q92673</id>
    </interactant>
    <interactant intactId="EBI-2431589">
        <id>PRO_0000000093</id>
        <label>APP</label>
        <dbReference type="UniProtKB" id="P05067"/>
    </interactant>
    <organismsDiffer>false</organismsDiffer>
    <experiments>3</experiments>
</comment>
<comment type="interaction">
    <interactant intactId="EBI-1171329">
        <id>Q92673</id>
    </interactant>
    <interactant intactId="EBI-78129">
        <id>P83916</id>
        <label>CBX1</label>
    </interactant>
    <organismsDiffer>false</organismsDiffer>
    <experiments>3</experiments>
</comment>
<comment type="interaction">
    <interactant intactId="EBI-1171329">
        <id>Q92673</id>
    </interactant>
    <interactant intactId="EBI-7132379">
        <id>P43681</id>
        <label>CHRNA4</label>
    </interactant>
    <organismsDiffer>false</organismsDiffer>
    <experiments>3</experiments>
</comment>
<comment type="interaction">
    <interactant intactId="EBI-1171329">
        <id>Q92673</id>
    </interactant>
    <interactant intactId="EBI-743758">
        <id>P26992</id>
        <label>CNTFR</label>
    </interactant>
    <organismsDiffer>false</organismsDiffer>
    <experiments>7</experiments>
</comment>
<comment type="interaction">
    <interactant intactId="EBI-1171329">
        <id>Q92673</id>
    </interactant>
    <interactant intactId="EBI-15587902">
        <id>O75462</id>
        <label>CRLF1</label>
    </interactant>
    <organismsDiffer>false</organismsDiffer>
    <experiments>3</experiments>
</comment>
<comment type="interaction">
    <interactant intactId="EBI-1171329">
        <id>Q92673</id>
    </interactant>
    <interactant intactId="EBI-742054">
        <id>Q96D03</id>
        <label>DDIT4L</label>
    </interactant>
    <organismsDiffer>false</organismsDiffer>
    <experiments>3</experiments>
</comment>
<comment type="interaction">
    <interactant intactId="EBI-1171329">
        <id>Q92673</id>
    </interactant>
    <interactant intactId="EBI-711977">
        <id>P20042</id>
        <label>EIF2S2</label>
    </interactant>
    <organismsDiffer>false</organismsDiffer>
    <experiments>3</experiments>
</comment>
<comment type="interaction">
    <interactant intactId="EBI-1171329">
        <id>Q92673</id>
    </interactant>
    <interactant intactId="EBI-25397146">
        <id>PRO_0000034005</id>
        <label>GDNF</label>
        <dbReference type="UniProtKB" id="P39905"/>
    </interactant>
    <organismsDiffer>false</organismsDiffer>
    <experiments>6</experiments>
</comment>
<comment type="interaction">
    <interactant intactId="EBI-1171329">
        <id>Q92673</id>
    </interactant>
    <interactant intactId="EBI-15854635">
        <id>P56159-2</id>
        <label>GFRA1</label>
    </interactant>
    <organismsDiffer>false</organismsDiffer>
    <experiments>3</experiments>
</comment>
<comment type="interaction">
    <interactant intactId="EBI-1171329">
        <id>Q92673</id>
    </interactant>
    <interactant intactId="EBI-447141">
        <id>Q9UJY5</id>
        <label>GGA1</label>
    </interactant>
    <organismsDiffer>false</organismsDiffer>
    <experiments>4</experiments>
</comment>
<comment type="interaction">
    <interactant intactId="EBI-1171329">
        <id>Q92673</id>
    </interactant>
    <interactant intactId="EBI-447646">
        <id>Q9UJY4</id>
        <label>GGA2</label>
    </interactant>
    <organismsDiffer>false</organismsDiffer>
    <experiments>5</experiments>
</comment>
<comment type="interaction">
    <interactant intactId="EBI-1171329">
        <id>Q92673</id>
    </interactant>
    <interactant intactId="EBI-296980">
        <id>O43301</id>
        <label>HSPA12A</label>
    </interactant>
    <organismsDiffer>false</organismsDiffer>
    <experiments>5</experiments>
</comment>
<comment type="interaction">
    <interactant intactId="EBI-1171329">
        <id>Q92673</id>
    </interactant>
    <interactant intactId="EBI-720533">
        <id>P05231</id>
        <label>IL6</label>
    </interactant>
    <organismsDiffer>false</organismsDiffer>
    <experiments>4</experiments>
</comment>
<comment type="interaction">
    <interactant intactId="EBI-1171329">
        <id>Q92673</id>
    </interactant>
    <interactant intactId="EBI-299383">
        <id>P08887</id>
        <label>IL6R</label>
    </interactant>
    <organismsDiffer>false</organismsDiffer>
    <experiments>7</experiments>
</comment>
<comment type="interaction">
    <interactant intactId="EBI-1171329">
        <id>Q92673</id>
    </interactant>
    <interactant intactId="EBI-399080">
        <id>Q92993</id>
        <label>KAT5</label>
    </interactant>
    <organismsDiffer>false</organismsDiffer>
    <experiments>3</experiments>
</comment>
<comment type="interaction">
    <interactant intactId="EBI-1171329">
        <id>Q92673</id>
    </interactant>
    <interactant intactId="EBI-715927">
        <id>P30533</id>
        <label>LRPAP1</label>
    </interactant>
    <organismsDiffer>false</organismsDiffer>
    <experiments>5</experiments>
</comment>
<comment type="interaction">
    <interactant intactId="EBI-1171329">
        <id>Q92673</id>
    </interactant>
    <interactant intactId="EBI-713665">
        <id>P19404</id>
        <label>NDUFV2</label>
    </interactant>
    <organismsDiffer>false</organismsDiffer>
    <experiments>3</experiments>
</comment>
<comment type="interaction">
    <interactant intactId="EBI-1171329">
        <id>Q92673</id>
    </interactant>
    <interactant intactId="EBI-712238">
        <id>P00491</id>
        <label>PNP</label>
    </interactant>
    <organismsDiffer>false</organismsDiffer>
    <experiments>3</experiments>
</comment>
<comment type="interaction">
    <interactant intactId="EBI-1171329">
        <id>Q92673</id>
    </interactant>
    <interactant intactId="EBI-12029004">
        <id>P78424</id>
        <label>POU6F2</label>
    </interactant>
    <organismsDiffer>false</organismsDiffer>
    <experiments>3</experiments>
</comment>
<comment type="interaction">
    <interactant intactId="EBI-1171329">
        <id>Q92673</id>
    </interactant>
    <interactant intactId="EBI-1244971">
        <id>Q15669</id>
        <label>RHOH</label>
    </interactant>
    <organismsDiffer>false</organismsDiffer>
    <experiments>3</experiments>
</comment>
<comment type="interaction">
    <interactant intactId="EBI-1171329">
        <id>Q92673</id>
    </interactant>
    <interactant intactId="EBI-25298876">
        <id>PRO_0000033164</id>
        <label>SORL1</label>
        <dbReference type="UniProtKB" id="Q92673"/>
    </interactant>
    <organismsDiffer>false</organismsDiffer>
    <experiments>9</experiments>
</comment>
<comment type="interaction">
    <interactant intactId="EBI-1171329">
        <id>Q92673</id>
    </interactant>
    <interactant intactId="EBI-25892084">
        <id>Q8N0S8</id>
        <label>VPS29</label>
    </interactant>
    <organismsDiffer>false</organismsDiffer>
    <experiments>3</experiments>
</comment>
<comment type="interaction">
    <interactant intactId="EBI-1171329">
        <id>Q92673</id>
    </interactant>
    <interactant intactId="EBI-25397991">
        <id>Q62997</id>
        <label>Gfra1</label>
    </interactant>
    <organismsDiffer>true</organismsDiffer>
    <experiments>5</experiments>
</comment>
<comment type="subcellular location">
    <subcellularLocation>
        <location evidence="7 14 21 29 30">Golgi apparatus membrane</location>
        <topology evidence="49">Single-pass type I membrane protein</topology>
    </subcellularLocation>
    <subcellularLocation>
        <location evidence="20 29 32">Golgi apparatus</location>
        <location evidence="20 29 32">trans-Golgi network membrane</location>
        <topology evidence="49">Single-pass type I membrane protein</topology>
    </subcellularLocation>
    <subcellularLocation>
        <location evidence="29 32">Endosome membrane</location>
        <topology evidence="49">Single-pass type I membrane protein</topology>
    </subcellularLocation>
    <subcellularLocation>
        <location evidence="14 20 29 42">Early endosome membrane</location>
        <topology evidence="49">Single-pass type I membrane protein</topology>
    </subcellularLocation>
    <subcellularLocation>
        <location evidence="21 42">Recycling endosome membrane</location>
        <topology evidence="49">Single-pass type I membrane protein</topology>
    </subcellularLocation>
    <subcellularLocation>
        <location evidence="21 29">Endoplasmic reticulum membrane</location>
        <topology evidence="49">Single-pass type I membrane protein</topology>
    </subcellularLocation>
    <subcellularLocation>
        <location evidence="29 32">Endosome</location>
        <location evidence="29 32">Multivesicular body membrane</location>
        <topology evidence="49">Single-pass type I membrane protein</topology>
    </subcellularLocation>
    <subcellularLocation>
        <location evidence="7 10 11 21 29 30 42">Cell membrane</location>
        <topology evidence="49">Single-pass type I membrane protein</topology>
    </subcellularLocation>
    <subcellularLocation>
        <location evidence="30">Cytoplasmic vesicle</location>
        <location evidence="30">Secretory vesicle membrane</location>
        <topology evidence="49">Single-pass type I membrane protein</topology>
    </subcellularLocation>
    <subcellularLocation>
        <location evidence="6 10 11 15 17">Secreted</location>
    </subcellularLocation>
    <text evidence="6 7 11 15 17 20 21 29 30 42">Mostly intracellular, predominantly in the trans-Golgi network (TGN) and in endosome, as well as in endosome-to-TGN retrograde vesicles; found at low levels on the plasma membrane (PubMed:11294867, PubMed:15053742, PubMed:17855360, PubMed:21385844, PubMed:21994944, PubMed:31138794). At the cell surface, partially subjected to proteolytic shedding that releases the ectodomain (also called soluble SORLA, solLR11 or sLR11) in the extracellular milieu (PubMed:11082041, PubMed:16393139, PubMed:16531402). The shedding may be catalyzed by ADAM17/TACE (PubMed:16393139). Following shedding, PSEN1/presenilin-1 cleaves the remaining transmembrane fragment and catalyzes the release of a C-terminal fragment in the cytosol and of a soluble N-terminal beta fragment in the extracellular milieu. The C-terminal cytosolic fragment localizes to the nucleus (PubMed:16531402). At the cell surface, the full-length protein undergoes partial clathrin-dependent endocytosis guided by clathrin adapter protein 2 (AP-2) (PubMed:11294867, PubMed:15053742, PubMed:17646382).</text>
</comment>
<comment type="tissue specificity">
    <text evidence="14 27 43 44">Highly expressed in brain (at protein level) (PubMed:16174740, PubMed:21147781, PubMed:9157966). Most abundant in the cerebellum, cerebral cortex and occipital pole; low levels in the putamen and thalamus (PubMed:16174740, PubMed:9157966). Expression is significantly reduced in the frontal cortex of patients suffering from Alzheimer disease (PubMed:16174740). Also expressed in spinal cord, spleen, testis, prostate, ovary, thyroid and lymph nodes (PubMed:8940146, PubMed:9157966).</text>
</comment>
<comment type="induction">
    <text evidence="6 33">Up-regulated by morphogenetic neuropeptide, also called head activator or HA (PubMed:11082041). Up-regulated under hypoxic conditions in hematopoietic stem and progenitor cells, a physiological condition encountered by these cells in the endosteum. This up-regulation may be mediated by HIF1A-induced transcription (PubMed:23486467).</text>
</comment>
<comment type="PTM">
    <text evidence="6 7 15 17 39 50 51">Within the Golgi apparatus, the propeptide may be cleaved off by FURIN or a furin-like protease (Probable). After cleavage, the propeptide interacts with the mature protein N-terminus, preventing the association with other ligands (PubMed:11294867). At the cell surface, partially subjected to proteolytic shedding that releases the ectodomain in the extracellular milieu (PubMed:11082041, PubMed:16393139, PubMed:16531402, PubMed:28265003). The shedding may be catalyzed by ADAM17/TACE (PubMed:16393139, PubMed:16531402). Following shedding, PSEN1/presenilin-1 cleaves the remaining transmembrane fragment and catalyzes the release of a C-terminal fragment in the cytosol and of a soluble N-terminal beta fragment in the extracellular milieu. The C-terminal cytosolic fragment localizes to the nucleus (PubMed:16531402).</text>
</comment>
<comment type="PTM">
    <text evidence="25">Phosphorylation at Ser-2206 facilitates the interaction with GGA1.</text>
</comment>
<comment type="disease" evidence="28 31 34 36">
    <disease id="DI-03832">
        <name>Alzheimer disease</name>
        <acronym>AD</acronym>
        <description>Alzheimer disease is a neurodegenerative disorder characterized by progressive dementia, loss of cognitive abilities, and deposition of fibrillar amyloid proteins as intraneuronal neurofibrillary tangles, extracellular amyloid plaques and vascular amyloid deposits. The major constituents of these plaques are neurotoxic amyloid-beta protein 40 and amyloid-beta protein 42, that are produced by the proteolysis of the transmembrane APP protein. The cytotoxic C-terminal fragments (CTFs) and the caspase-cleaved products, such as C31, are also implicated in neuronal death.</description>
        <dbReference type="MIM" id="104300"/>
    </disease>
    <text>The gene represented in this entry may be involved in disease pathogenesis.</text>
</comment>
<comment type="miscellaneous">
    <text evidence="38">There may be a positive correlation of body mass index with levels of SORL1 transcript and SORLA protein in visceral adipose tissue.</text>
</comment>
<comment type="similarity">
    <text evidence="49">Belongs to the VPS10-related sortilin family. SORL1 subfamily.</text>
</comment>
<reference key="1">
    <citation type="journal article" date="1997" name="Arterioscler. Thromb. Vasc. Biol.">
        <title>A novel mosaic protein containing LDL receptor elements is highly conserved in humans and chickens.</title>
        <authorList>
            <person name="Morwald S."/>
            <person name="Yamazaki H."/>
            <person name="Bujo H."/>
            <person name="Kusunoki J."/>
            <person name="Kanaki T."/>
            <person name="Seimiya K."/>
            <person name="Morisaki N."/>
            <person name="Nimpf J."/>
            <person name="Schneider W.J."/>
            <person name="Saito Y."/>
        </authorList>
    </citation>
    <scope>NUCLEOTIDE SEQUENCE [MRNA]</scope>
    <scope>VARIANTS GLU-1074 AND ILE-1967</scope>
    <scope>TISSUE SPECIFICITY</scope>
    <source>
        <tissue>Brain</tissue>
    </source>
</reference>
<reference key="2">
    <citation type="journal article" date="1996" name="J. Biol. Chem.">
        <title>Molecular characterization of a novel human hybrid-type receptor that binds the alpha2-macroglobulin receptor-associated protein.</title>
        <authorList>
            <person name="Jacobsen L."/>
            <person name="Madsen P."/>
            <person name="Moestrup S.K."/>
            <person name="Lund A.H."/>
            <person name="Tommerup N."/>
            <person name="Nykjaer A."/>
            <person name="Sottrup-Jensen L."/>
            <person name="Gliemann J."/>
            <person name="Petersen C.M."/>
        </authorList>
    </citation>
    <scope>NUCLEOTIDE SEQUENCE [MRNA]</scope>
    <scope>PROTEIN SEQUENCE OF 82-91; 114-121; 405-415 AND 2019-2030</scope>
    <scope>VARIANTS GLU-1074 AND ILE-1967</scope>
    <scope>TISSUE SPECIFICITY</scope>
    <scope>INTERACTION WITH LRPAP1</scope>
    <source>
        <tissue>Brain</tissue>
    </source>
</reference>
<reference key="3">
    <citation type="journal article" date="2006" name="Nature">
        <title>Human chromosome 11 DNA sequence and analysis including novel gene identification.</title>
        <authorList>
            <person name="Taylor T.D."/>
            <person name="Noguchi H."/>
            <person name="Totoki Y."/>
            <person name="Toyoda A."/>
            <person name="Kuroki Y."/>
            <person name="Dewar K."/>
            <person name="Lloyd C."/>
            <person name="Itoh T."/>
            <person name="Takeda T."/>
            <person name="Kim D.-W."/>
            <person name="She X."/>
            <person name="Barlow K.F."/>
            <person name="Bloom T."/>
            <person name="Bruford E."/>
            <person name="Chang J.L."/>
            <person name="Cuomo C.A."/>
            <person name="Eichler E."/>
            <person name="FitzGerald M.G."/>
            <person name="Jaffe D.B."/>
            <person name="LaButti K."/>
            <person name="Nicol R."/>
            <person name="Park H.-S."/>
            <person name="Seaman C."/>
            <person name="Sougnez C."/>
            <person name="Yang X."/>
            <person name="Zimmer A.R."/>
            <person name="Zody M.C."/>
            <person name="Birren B.W."/>
            <person name="Nusbaum C."/>
            <person name="Fujiyama A."/>
            <person name="Hattori M."/>
            <person name="Rogers J."/>
            <person name="Lander E.S."/>
            <person name="Sakaki Y."/>
        </authorList>
    </citation>
    <scope>NUCLEOTIDE SEQUENCE [LARGE SCALE GENOMIC DNA]</scope>
</reference>
<reference key="4">
    <citation type="submission" date="2005-07" db="EMBL/GenBank/DDBJ databases">
        <authorList>
            <person name="Mural R.J."/>
            <person name="Istrail S."/>
            <person name="Sutton G.G."/>
            <person name="Florea L."/>
            <person name="Halpern A.L."/>
            <person name="Mobarry C.M."/>
            <person name="Lippert R."/>
            <person name="Walenz B."/>
            <person name="Shatkay H."/>
            <person name="Dew I."/>
            <person name="Miller J.R."/>
            <person name="Flanigan M.J."/>
            <person name="Edwards N.J."/>
            <person name="Bolanos R."/>
            <person name="Fasulo D."/>
            <person name="Halldorsson B.V."/>
            <person name="Hannenhalli S."/>
            <person name="Turner R."/>
            <person name="Yooseph S."/>
            <person name="Lu F."/>
            <person name="Nusskern D.R."/>
            <person name="Shue B.C."/>
            <person name="Zheng X.H."/>
            <person name="Zhong F."/>
            <person name="Delcher A.L."/>
            <person name="Huson D.H."/>
            <person name="Kravitz S.A."/>
            <person name="Mouchard L."/>
            <person name="Reinert K."/>
            <person name="Remington K.A."/>
            <person name="Clark A.G."/>
            <person name="Waterman M.S."/>
            <person name="Eichler E.E."/>
            <person name="Adams M.D."/>
            <person name="Hunkapiller M.W."/>
            <person name="Myers E.W."/>
            <person name="Venter J.C."/>
        </authorList>
    </citation>
    <scope>NUCLEOTIDE SEQUENCE [LARGE SCALE GENOMIC DNA]</scope>
    <scope>VARIANTS GLU-1074 AND ILE-1967</scope>
</reference>
<reference key="5">
    <citation type="journal article" date="2004" name="Genome Res.">
        <title>The status, quality, and expansion of the NIH full-length cDNA project: the Mammalian Gene Collection (MGC).</title>
        <authorList>
            <consortium name="The MGC Project Team"/>
        </authorList>
    </citation>
    <scope>NUCLEOTIDE SEQUENCE [LARGE SCALE MRNA]</scope>
    <scope>VARIANTS GLU-1074 AND ILE-1967</scope>
    <source>
        <tissue>Brain</tissue>
    </source>
</reference>
<reference key="6">
    <citation type="journal article" date="2000" name="J. Cell Sci.">
        <title>Ectodomain shedding, translocation and synthesis of SorLA are stimulated by its ligand head activator.</title>
        <authorList>
            <person name="Hampe W."/>
            <person name="Riedel I.B."/>
            <person name="Lintzel J."/>
            <person name="Bader C.O."/>
            <person name="Franke I."/>
            <person name="Schaller H.C."/>
        </authorList>
    </citation>
    <scope>INTERACTION WITH HA</scope>
    <scope>INDUCTION BY HA</scope>
    <scope>SUBCELLULAR LOCATION</scope>
    <scope>CLEAVAGE OF THE PROPEPTIDE</scope>
</reference>
<reference key="7">
    <citation type="journal article" date="2001" name="J. Biol. Chem.">
        <title>Activation and functional characterization of the mosaic receptor SorLA/LR11.</title>
        <authorList>
            <person name="Jacobsen L."/>
            <person name="Madsen P."/>
            <person name="Jacobsen C."/>
            <person name="Nielsen M.S."/>
            <person name="Gliemann J."/>
            <person name="Petersen C.M."/>
        </authorList>
    </citation>
    <scope>PROTEIN SEQUENCE OF 82-86</scope>
    <scope>CLEAVAGE OF THE PROPEPTIDE</scope>
    <scope>INTERACTION WITH HA; LRPAP1; NTS AND PROPEPTIDE</scope>
    <scope>SUBCELLULAR LOCATION</scope>
    <scope>GLYCOSYLATION</scope>
    <scope>MUTAGENESIS OF 78-ARG--ARG-81</scope>
</reference>
<reference key="8">
    <citation type="journal article" date="2002" name="Biol. Chem.">
        <title>Characterization of the VPS10 domain of SorLA/LR11 as binding site for the neuropeptide HA.</title>
        <authorList>
            <person name="Lintzel J."/>
            <person name="Franke I."/>
            <person name="Riedel I.B."/>
            <person name="Schaller H.C."/>
            <person name="Hampe W."/>
        </authorList>
    </citation>
    <scope>INTERACTION WITH HA; LRPAP1 AND PROPEPTIDE</scope>
</reference>
<reference key="9">
    <citation type="journal article" date="2002" name="FEBS Lett.">
        <title>The sorLA cytoplasmic domain interacts with GGA1 and -2 and defines minimum requirements for GGA binding.</title>
        <authorList>
            <person name="Jacobsen L."/>
            <person name="Madsen P."/>
            <person name="Nielsen M.S."/>
            <person name="Geraerts W.P.M."/>
            <person name="Gliemann J."/>
            <person name="Smit A.B."/>
            <person name="Petersen C.M."/>
        </authorList>
    </citation>
    <scope>INTERACTION WITH GGA1 AND GGA2</scope>
</reference>
<reference key="10">
    <citation type="journal article" date="2004" name="Biochem. J.">
        <title>The mosaic receptor sorLA/LR11 binds components of the plasminogen-activating system and platelet-derived growth factor-BB similarly to LRP1 (low-density lipoprotein receptor-related protein), but mediates slow internalization of bound ligand.</title>
        <authorList>
            <person name="Gliemann J."/>
            <person name="Hermey G."/>
            <person name="Nykjaer A."/>
            <person name="Petersen C.M."/>
            <person name="Jacobsen C."/>
            <person name="Andreasen P.A."/>
        </authorList>
    </citation>
    <scope>SUBCELLULAR LOCATION</scope>
    <scope>INTERACTION WITH LRPAP1; PDGFB; PLAT; PLAU AND SERPINE1</scope>
</reference>
<reference key="11">
    <citation type="journal article" date="2004" name="Circ. Res.">
        <title>LR11, an LDL receptor gene family member, is a novel regulator of smooth muscle cell migration.</title>
        <authorList>
            <person name="Zhu Y."/>
            <person name="Bujo H."/>
            <person name="Yamazaki H."/>
            <person name="Ohwaki K."/>
            <person name="Jiang M."/>
            <person name="Hirayama S."/>
            <person name="Kanaki T."/>
            <person name="Shibasaki M."/>
            <person name="Takahashi K."/>
            <person name="Schneider W.J."/>
            <person name="Saito Y."/>
        </authorList>
    </citation>
    <scope>FUNCTION</scope>
    <scope>SUBCELLULAR LOCATION</scope>
    <scope>INTERACTION WITH PLAUR</scope>
</reference>
<reference key="12">
    <citation type="journal article" date="2004" name="J. Biol. Chem.">
        <title>Functional organization of the sortilin Vps10p domain.</title>
        <authorList>
            <person name="Westergaard U.B."/>
            <person name="Soerensen E.S."/>
            <person name="Hermey G."/>
            <person name="Nielsen M.S."/>
            <person name="Nykjaer A."/>
            <person name="Kirkegaard K."/>
            <person name="Jacobsen C."/>
            <person name="Gliemann J."/>
            <person name="Madsen P."/>
            <person name="Petersen C.M."/>
        </authorList>
    </citation>
    <scope>INTERACTION WITH LRPAP1; GDNF AND PROPEPTIDE</scope>
</reference>
<reference key="13">
    <citation type="journal article" date="2005" name="Proc. Natl. Acad. Sci. U.S.A.">
        <title>Neuronal sorting protein-related receptor sorLA/LR11 regulates processing of the amyloid precursor protein.</title>
        <authorList>
            <person name="Andersen O.M."/>
            <person name="Reiche J."/>
            <person name="Schmidt V."/>
            <person name="Gotthardt M."/>
            <person name="Spoelgen R."/>
            <person name="Behlke J."/>
            <person name="von Arnim C.A."/>
            <person name="Breiderhoff T."/>
            <person name="Jansen P."/>
            <person name="Wu X."/>
            <person name="Bales K.R."/>
            <person name="Cappai R."/>
            <person name="Masters C.L."/>
            <person name="Gliemann J."/>
            <person name="Mufson E.J."/>
            <person name="Hyman B.T."/>
            <person name="Paul S.M."/>
            <person name="Nykjaer A."/>
            <person name="Willnow T.E."/>
        </authorList>
    </citation>
    <scope>FUNCTION IN APP TRAFFICKING</scope>
    <scope>SUBCELLULAR LOCATION</scope>
    <scope>INTERACTION WITH APP</scope>
    <scope>TISSUE SPECIFICITY</scope>
</reference>
<reference key="14">
    <citation type="journal article" date="2006" name="Biochem. J.">
        <title>Tumour necrosis factor alpha-converting enzyme mediates ectodomain shedding of Vps10p-domain receptor family members.</title>
        <authorList>
            <person name="Hermey G."/>
            <person name="Sjoegaard S.S."/>
            <person name="Petersen C.M."/>
            <person name="Nykjaer A."/>
            <person name="Gliemann J."/>
        </authorList>
    </citation>
    <scope>INTERACTION WITH PDGFB</scope>
    <scope>SUBCELLULAR LOCATION</scope>
    <scope>SHEDDING BY ADAM17</scope>
</reference>
<reference key="15">
    <citation type="journal article" date="2006" name="J. Biol. Chem.">
        <title>SorLA signaling by regulated intramembrane proteolysis.</title>
        <authorList>
            <person name="Boehm C."/>
            <person name="Seibel N.M."/>
            <person name="Henkel B."/>
            <person name="Steiner H."/>
            <person name="Haass C."/>
            <person name="Hampe W."/>
        </authorList>
    </citation>
    <scope>SUBCELLULAR LOCATION</scope>
    <scope>CLEAVAGE BY PSEN1</scope>
    <scope>MUTAGENESIS OF 2163-ARG-ARG-2164</scope>
</reference>
<reference key="16">
    <citation type="journal article" date="2006" name="J. Neurosci.">
        <title>Interaction of the cytosolic domains of sorLA/LR11 with the amyloid precursor protein (APP) and beta-secretase beta-site APP-cleaving enzyme.</title>
        <authorList>
            <person name="Spoelgen R."/>
            <person name="von Arnim C.A."/>
            <person name="Thomas A.V."/>
            <person name="Peltan I.D."/>
            <person name="Koker M."/>
            <person name="Deng A."/>
            <person name="Irizarry M.C."/>
            <person name="Andersen O.M."/>
            <person name="Willnow T.E."/>
            <person name="Hyman B.T."/>
        </authorList>
    </citation>
    <scope>FUNCTION</scope>
    <scope>INTERACTION WITH APP AND BACE1</scope>
</reference>
<reference key="17">
    <citation type="journal article" date="2007" name="Biochemistry">
        <title>Apolipoprotein A-V interaction with members of the low density lipoprotein receptor gene family.</title>
        <authorList>
            <person name="Nilsson S.K."/>
            <person name="Lookene A."/>
            <person name="Beckstead J.A."/>
            <person name="Gliemann J."/>
            <person name="Ryan R.O."/>
            <person name="Olivecrona G."/>
        </authorList>
    </citation>
    <scope>INTERACTION WITH APOA5</scope>
</reference>
<reference key="18">
    <citation type="journal article" date="2007" name="J. Biol. Chem.">
        <title>SorLA/LR11 regulates processing of amyloid precursor protein via interaction with adaptors GGA and PACS-1.</title>
        <authorList>
            <person name="Schmidt V."/>
            <person name="Sporbert A."/>
            <person name="Rohe M."/>
            <person name="Reimer T."/>
            <person name="Rehm A."/>
            <person name="Andersen O.M."/>
            <person name="Willnow T.E."/>
        </authorList>
    </citation>
    <scope>FUNCTION</scope>
    <scope>INTERACTION WITH APP; GGA1 AND PACS1</scope>
    <scope>SUBCELLULAR LOCATION</scope>
    <scope>MUTAGENESIS OF 2190-ASP--ASP-2198 AND 2208-ASP--MET-2211</scope>
</reference>
<reference key="19">
    <citation type="journal article" date="2007" name="Mol. Cell. Biol.">
        <title>Sorting by the cytoplasmic domain of the amyloid precursor protein binding receptor SorLA.</title>
        <authorList>
            <person name="Nielsen M.S."/>
            <person name="Gustafsen C."/>
            <person name="Madsen P."/>
            <person name="Nyengaard J.R."/>
            <person name="Hermey G."/>
            <person name="Bakke O."/>
            <person name="Mari M."/>
            <person name="Schu P."/>
            <person name="Pohlmann R."/>
            <person name="Dennes A."/>
            <person name="Petersen C.M."/>
        </authorList>
    </citation>
    <scope>FUNCTION</scope>
    <scope>INTERACTION WITH PACS1; AP-1 COMPLEX AND AP-2 COMPLEX</scope>
    <scope>SUBCELLULAR LOCATION</scope>
    <scope>MUTAGENESIS OF 2172-PHE--TYR-2177; 2190-ASP--ALA-2214; 2190-ASP--ASP-2198; 2201-MET-ILE-2202 AND 2211-MET--ALA-2214</scope>
</reference>
<reference key="20">
    <citation type="journal article" date="2008" name="J. Biol. Chem.">
        <title>Endocytosis of apolipoprotein A-V by members of the low density lipoprotein receptor and the VPS10p domain receptor families.</title>
        <authorList>
            <person name="Nilsson S.K."/>
            <person name="Christensen S."/>
            <person name="Raarup M.K."/>
            <person name="Ryan R.O."/>
            <person name="Nielsen M.S."/>
            <person name="Olivecrona G."/>
        </authorList>
    </citation>
    <scope>FUNCTION</scope>
    <scope>INTERACTION WITH APOA5</scope>
</reference>
<reference key="21">
    <citation type="journal article" date="2008" name="Neurosci. Lett.">
        <title>No association of SORL1 SNPs with Alzheimer's disease.</title>
        <authorList>
            <person name="Minster R.L."/>
            <person name="DeKosky S.T."/>
            <person name="Kamboh M.I."/>
        </authorList>
    </citation>
    <scope>LACK OF ASSOCIATION WITH SUSCEPTIBILITY TO LATE-ONSET ALZHEIMER DISEASE</scope>
</reference>
<reference key="22">
    <citation type="journal article" date="2009" name="J. Proteome Res.">
        <title>Glycoproteomics analysis of human liver tissue by combination of multiple enzyme digestion and hydrazide chemistry.</title>
        <authorList>
            <person name="Chen R."/>
            <person name="Jiang X."/>
            <person name="Sun D."/>
            <person name="Han G."/>
            <person name="Wang F."/>
            <person name="Ye M."/>
            <person name="Wang L."/>
            <person name="Zou H."/>
        </authorList>
    </citation>
    <scope>GLYCOSYLATION [LARGE SCALE ANALYSIS] AT ASN-99; ASN-1733; ASN-2010; ASN-2076 AND ASN-2092</scope>
    <source>
        <tissue>Liver</tissue>
    </source>
</reference>
<reference key="23">
    <citation type="journal article" date="2010" name="Mol. Cell. Biol.">
        <title>SORLA/SORL1 functionally interacts with SPAK to control renal activation of Na(+)-K(+)-Cl(-) cotransporter 2.</title>
        <authorList>
            <person name="Reiche J."/>
            <person name="Theilig F."/>
            <person name="Rafiqi F.H."/>
            <person name="Carlo A.S."/>
            <person name="Militz D."/>
            <person name="Mutig K."/>
            <person name="Todiras M."/>
            <person name="Christensen E.I."/>
            <person name="Ellison D.H."/>
            <person name="Bader M."/>
            <person name="Nykjaer A."/>
            <person name="Bachmann S."/>
            <person name="Alessi D."/>
            <person name="Willnow T.E."/>
        </authorList>
    </citation>
    <scope>INTERACTION WITH STK39</scope>
</reference>
<reference key="24">
    <citation type="journal article" date="2010" name="Sci. Signal.">
        <title>Quantitative phosphoproteomics reveals widespread full phosphorylation site occupancy during mitosis.</title>
        <authorList>
            <person name="Olsen J.V."/>
            <person name="Vermeulen M."/>
            <person name="Santamaria A."/>
            <person name="Kumar C."/>
            <person name="Miller M.L."/>
            <person name="Jensen L.J."/>
            <person name="Gnad F."/>
            <person name="Cox J."/>
            <person name="Jensen T.S."/>
            <person name="Nigg E.A."/>
            <person name="Brunak S."/>
            <person name="Mann M."/>
        </authorList>
    </citation>
    <scope>PHOSPHORYLATION [LARGE SCALE ANALYSIS] AT SER-114</scope>
    <scope>IDENTIFICATION BY MASS SPECTROMETRY [LARGE SCALE ANALYSIS]</scope>
    <source>
        <tissue>Cervix carcinoma</tissue>
    </source>
</reference>
<reference key="25">
    <citation type="journal article" date="2011" name="Arch. Neurol.">
        <title>Meta-analysis of the association between variants in SORL1 and Alzheimer disease.</title>
        <authorList>
            <consortium name="Genetic and Environmental Risk in Alzheimer Disease 1 Consortium"/>
            <person name="Reitz C."/>
            <person name="Cheng R."/>
            <person name="Rogaeva E."/>
            <person name="Lee J.H."/>
            <person name="Tokuhiro S."/>
            <person name="Zou F."/>
            <person name="Bettens K."/>
            <person name="Sleegers K."/>
            <person name="Tan E.K."/>
            <person name="Kimura R."/>
            <person name="Shibata N."/>
            <person name="Arai H."/>
            <person name="Kamboh M.I."/>
            <person name="Prince J.A."/>
            <person name="Maier W."/>
            <person name="Riemenschneider M."/>
            <person name="Owen M."/>
            <person name="Harold D."/>
            <person name="Hollingworth P."/>
            <person name="Cellini E."/>
            <person name="Sorbi S."/>
            <person name="Nacmias B."/>
            <person name="Takeda M."/>
            <person name="Pericak-Vance M.A."/>
            <person name="Haines J.L."/>
            <person name="Younkin S."/>
            <person name="Williams J."/>
            <person name="van Broeckhoven C."/>
            <person name="Farrer L.A."/>
            <person name="St George-Hyslop P.H."/>
            <person name="Mayeux R."/>
        </authorList>
    </citation>
    <scope>INVOLVEMENT IN AD</scope>
</reference>
<reference key="26">
    <citation type="journal article" date="2011" name="J. Biol. Chem.">
        <title>Rho kinase II phosphorylation of the lipoprotein receptor LR11/SORLA alters amyloid-beta production.</title>
        <authorList>
            <person name="Herskowitz J.H."/>
            <person name="Seyfried N.T."/>
            <person name="Gearing M."/>
            <person name="Kahn R.A."/>
            <person name="Peng J."/>
            <person name="Levey A.I."/>
            <person name="Lah J.J."/>
        </authorList>
    </citation>
    <scope>PHOSPHORYLATION AT SER-2206</scope>
    <scope>INTERACTION WITH ROCK2</scope>
    <scope>TISSUE SPECIFICITY</scope>
</reference>
<reference key="27">
    <citation type="journal article" date="2011" name="J. Biol. Chem.">
        <title>Sorting protein-related receptor SorLA controls regulated secretion of glial cell line-derived neurotrophic factor.</title>
        <authorList>
            <person name="Geng Z."/>
            <person name="Xu F.Y."/>
            <person name="Huang S.H."/>
            <person name="Chen Z.Y."/>
        </authorList>
    </citation>
    <scope>FUNCTION</scope>
    <scope>INTERACTION WITH GDNF</scope>
    <scope>SUBCELLULAR LOCATION</scope>
</reference>
<reference key="28">
    <citation type="journal article" date="2011" name="J. Cell Sci.">
        <title>SorLA regulates the activity of lipoprotein lipase by intracellular trafficking.</title>
        <authorList>
            <person name="Klinger S.C."/>
            <person name="Glerup S."/>
            <person name="Raarup M.K."/>
            <person name="Mari M.C."/>
            <person name="Nyegaard M."/>
            <person name="Koster G."/>
            <person name="Prabakaran T."/>
            <person name="Nilsson S.K."/>
            <person name="Kjaergaard M.M."/>
            <person name="Bakke O."/>
            <person name="Nykjaer A."/>
            <person name="Olivecrona G."/>
            <person name="Petersen C.M."/>
            <person name="Nielsen M.S."/>
        </authorList>
    </citation>
    <scope>FUNCTION</scope>
    <scope>INTERACTION WITH LPL</scope>
    <scope>SUBCELLULAR LOCATION</scope>
    <scope>TISSUE SPECIFICITY</scope>
    <scope>MUTAGENESIS OF 2211-MET--ALA-2214</scope>
</reference>
<reference key="29">
    <citation type="journal article" date="2013" name="Cell Rep.">
        <title>SorLA controls neurotrophic activity by sorting of GDNF and its receptors GFRalpha1 and RET.</title>
        <authorList>
            <person name="Glerup S."/>
            <person name="Lume M."/>
            <person name="Olsen D."/>
            <person name="Nyengaard J.R."/>
            <person name="Vaegter C.B."/>
            <person name="Gustafsen C."/>
            <person name="Christensen E.I."/>
            <person name="Kjolby M."/>
            <person name="Hay-Schmidt A."/>
            <person name="Bender D."/>
            <person name="Madsen P."/>
            <person name="Saarma M."/>
            <person name="Nykjaer A."/>
            <person name="Petersen C.M."/>
        </authorList>
    </citation>
    <scope>FUNCTION</scope>
    <scope>INTERACTION WITH GDNF; GFRA1; GFRA2; GFRA3 AND GFRA4</scope>
    <scope>SUBCELLULAR LOCATION</scope>
</reference>
<reference key="30">
    <citation type="journal article" date="2013" name="J. Biol. Chem.">
        <title>The soluble form of LR11 protein is a regulator of hypoxia-induced, urokinase-type plasminogen activator receptor (uPAR)-mediated adhesion of immature hematological cells.</title>
        <authorList>
            <person name="Nishii K."/>
            <person name="Nakaseko C."/>
            <person name="Jiang M."/>
            <person name="Shimizu N."/>
            <person name="Takeuchi M."/>
            <person name="Schneider W.J."/>
            <person name="Bujo H."/>
        </authorList>
    </citation>
    <scope>FUNCTION</scope>
    <scope>INTERACTION WITH PLAUR</scope>
    <scope>INDUCTION BY HYPOXIA</scope>
</reference>
<reference key="31">
    <citation type="journal article" date="2013" name="PLoS ONE">
        <title>SORL1 is genetically associated with late-onset Alzheimer's disease in Japanese, Koreans and Caucasians.</title>
        <authorList>
            <consortium name="Alzheimer Disease Genetics Consortium"/>
            <person name="Miyashita A."/>
            <person name="Koike A."/>
            <person name="Jun G."/>
            <person name="Wang L.S."/>
            <person name="Takahashi S."/>
            <person name="Matsubara E."/>
            <person name="Kawarabayashi T."/>
            <person name="Shoji M."/>
            <person name="Tomita N."/>
            <person name="Arai H."/>
            <person name="Asada T."/>
            <person name="Harigaya Y."/>
            <person name="Ikeda M."/>
            <person name="Amari M."/>
            <person name="Hanyu H."/>
            <person name="Higuchi S."/>
            <person name="Ikeuchi T."/>
            <person name="Nishizawa M."/>
            <person name="Suga M."/>
            <person name="Kawase Y."/>
            <person name="Akatsu H."/>
            <person name="Kosaka K."/>
            <person name="Yamamoto T."/>
            <person name="Imagawa M."/>
            <person name="Hamaguchi T."/>
            <person name="Yamada M."/>
            <person name="Moriaha T."/>
            <person name="Takeda M."/>
            <person name="Takao T."/>
            <person name="Nakata K."/>
            <person name="Fujisawa Y."/>
            <person name="Sasaki K."/>
            <person name="Watanabe K."/>
            <person name="Nakashima K."/>
            <person name="Urakami K."/>
            <person name="Ooya T."/>
            <person name="Takahashi M."/>
            <person name="Yuzuriha T."/>
            <person name="Serikawa K."/>
            <person name="Yoshimoto S."/>
            <person name="Nakagawa R."/>
            <person name="Kim J.W."/>
            <person name="Ki C.S."/>
            <person name="Won H.H."/>
            <person name="Na D.L."/>
            <person name="Seo S.W."/>
            <person name="Mook-Jung I."/>
            <person name="St George-Hyslop P."/>
            <person name="Mayeux R."/>
            <person name="Haines J.L."/>
            <person name="Pericak-Vance M.A."/>
            <person name="Yoshida M."/>
            <person name="Nishida N."/>
            <person name="Tokunaga K."/>
            <person name="Yamamoto K."/>
            <person name="Tsuji S."/>
            <person name="Kanazawa I."/>
            <person name="Ihara Y."/>
            <person name="Schellenberg G.D."/>
            <person name="Farrer L.A."/>
            <person name="Kuwano R."/>
        </authorList>
    </citation>
    <scope>INVOLVEMENT IN AD</scope>
</reference>
<reference key="32">
    <citation type="journal article" date="2013" name="PLoS ONE">
        <title>SORLA-mediated trafficking of TrkB enhances the response of neurons to BDNF.</title>
        <authorList>
            <person name="Rohe M."/>
            <person name="Hartl D."/>
            <person name="Fjorback A.N."/>
            <person name="Klose J."/>
            <person name="Willnow T.E."/>
        </authorList>
    </citation>
    <scope>FUNCTION</scope>
</reference>
<reference key="33">
    <citation type="journal article" date="2014" name="J. Proteomics">
        <title>An enzyme assisted RP-RPLC approach for in-depth analysis of human liver phosphoproteome.</title>
        <authorList>
            <person name="Bian Y."/>
            <person name="Song C."/>
            <person name="Cheng K."/>
            <person name="Dong M."/>
            <person name="Wang F."/>
            <person name="Huang J."/>
            <person name="Sun D."/>
            <person name="Wang L."/>
            <person name="Ye M."/>
            <person name="Zou H."/>
        </authorList>
    </citation>
    <scope>IDENTIFICATION BY MASS SPECTROMETRY [LARGE SCALE ANALYSIS]</scope>
    <source>
        <tissue>Liver</tissue>
    </source>
</reference>
<reference key="34">
    <citation type="journal article" date="2014" name="Sci. Transl. Med.">
        <title>Lysosomal sorting of amyloid-beta by the SORLA receptor is impaired by a familial Alzheimer's disease mutation.</title>
        <authorList>
            <person name="Caglayan S."/>
            <person name="Takagi-Niidome S."/>
            <person name="Liao F."/>
            <person name="Carlo A.S."/>
            <person name="Schmidt V."/>
            <person name="Burgert T."/>
            <person name="Kitago Y."/>
            <person name="Fuechtbauer E.M."/>
            <person name="Fuechtbauer A."/>
            <person name="Holtzman D.M."/>
            <person name="Takagi J."/>
            <person name="Willnow T.E."/>
        </authorList>
    </citation>
    <scope>FUNCTION</scope>
    <scope>INTERACTION WITH APP AND PROPEPTIDE</scope>
    <scope>CHARACTERIZATION OF VARIANT AD ARG-511</scope>
</reference>
<reference key="35">
    <citation type="journal article" date="2015" name="Nat. Commun.">
        <title>Soluble LR11/SorLA represses thermogenesis in adipose tissue and correlates with BMI in humans.</title>
        <authorList>
            <person name="Whittle A.J."/>
            <person name="Jiang M."/>
            <person name="Peirce V."/>
            <person name="Relat J."/>
            <person name="Virtue S."/>
            <person name="Ebinuma H."/>
            <person name="Fukamachi I."/>
            <person name="Yamaguchi T."/>
            <person name="Takahashi M."/>
            <person name="Murano T."/>
            <person name="Tatsuno I."/>
            <person name="Takeuchi M."/>
            <person name="Nakaseko C."/>
            <person name="Jin W."/>
            <person name="Jin Z."/>
            <person name="Campbell M."/>
            <person name="Schneider W.J."/>
            <person name="Vidal-Puig A."/>
            <person name="Bujo H."/>
        </authorList>
    </citation>
    <scope>POTENTIAL ASSOCIATION WITH BODY MASS INDEX</scope>
</reference>
<reference key="36">
    <citation type="journal article" date="2016" name="J. Clin. Invest.">
        <title>SORLA facilitates insulin receptor signaling in adipocytes and exacerbates obesity.</title>
        <authorList>
            <person name="Schmidt V."/>
            <person name="Schulz N."/>
            <person name="Yan X."/>
            <person name="Schuermann A."/>
            <person name="Kempa S."/>
            <person name="Kern M."/>
            <person name="Blueher M."/>
            <person name="Poy M.N."/>
            <person name="Olivecrona G."/>
            <person name="Willnow T.E."/>
        </authorList>
    </citation>
    <scope>FUNCTION</scope>
    <scope>INTERACTION WITH INSR</scope>
    <scope>POTENTIAL ASSOCIATION WITH BODY MASS INDEX</scope>
</reference>
<reference key="37">
    <citation type="journal article" date="2016" name="Mol. Cell. Biol.">
        <title>Cytokine-like factor 1, an essential facilitator of cardiotrophin-like cytokine:ciliary neurotrophic factor receptor alpha signaling and sorLA-mediated turnover.</title>
        <authorList>
            <person name="Larsen J.V."/>
            <person name="Kristensen A.M."/>
            <person name="Pallesen L.T."/>
            <person name="Bauer J."/>
            <person name="Vaegter C.B."/>
            <person name="Nielsen M.S."/>
            <person name="Madsen P."/>
            <person name="Petersen C.M."/>
        </authorList>
    </citation>
    <scope>FUNCTION</scope>
    <scope>INTERACTION WITH CLCF1; CRLF1; CNTFR AND LRPAP1</scope>
</reference>
<reference key="38">
    <citation type="journal article" date="2017" name="Mol. Cell. Biol.">
        <title>SorLA in Interleukin-6 Signaling and Turnover.</title>
        <authorList>
            <person name="Larsen J.V."/>
            <person name="Petersen C.M."/>
        </authorList>
    </citation>
    <scope>FUNCTION</scope>
    <scope>INTERACTION WITH IL6 AND IL6R</scope>
    <scope>SHEDDING FROM THE CELL SURFACE</scope>
</reference>
<reference key="39">
    <citation type="journal article" date="2019" name="Clin. Chim. Acta">
        <title>Soluble LR11 competes with amyloid beta in binding to cerebrospinal fluid-high-density lipoprotein.</title>
        <authorList>
            <person name="Yano K."/>
            <person name="Hirayama S."/>
            <person name="Misawa N."/>
            <person name="Furuta A."/>
            <person name="Ueno T."/>
            <person name="Motoi Y."/>
            <person name="Seino U."/>
            <person name="Ebinuma H."/>
            <person name="Ikeuchi T."/>
            <person name="Schneider W.J."/>
            <person name="Bujo H."/>
            <person name="Miida T."/>
        </authorList>
    </citation>
    <scope>INTERACTION WITH APOE</scope>
</reference>
<reference key="40">
    <citation type="journal article" date="2019" name="Nat. Commun.">
        <title>SORLA regulates endosomal trafficking and oncogenic fitness of HER2.</title>
        <authorList>
            <person name="Pietilae M."/>
            <person name="Sahgal P."/>
            <person name="Peuhu E."/>
            <person name="Jaentti N.Z."/>
            <person name="Paatero I."/>
            <person name="Naervae E."/>
            <person name="Al-Akhrass H."/>
            <person name="Lilja J."/>
            <person name="Georgiadou M."/>
            <person name="Andersen O.M."/>
            <person name="Padzik A."/>
            <person name="Sihto H."/>
            <person name="Joensuu H."/>
            <person name="Blomqvist M."/>
            <person name="Saarinen I."/>
            <person name="Bostroem P.J."/>
            <person name="Taimen P."/>
            <person name="Ivaska J."/>
        </authorList>
    </citation>
    <scope>FUNCTION</scope>
    <scope>INTERACTION WITH ERBB2</scope>
    <scope>SUBCELLULAR LOCATION</scope>
</reference>
<reference key="41">
    <citation type="journal article" date="2019" name="Sci. Rep.">
        <title>HSPA12A targets the cytoplasmic domain and affects the trafficking of the Amyloid Precursor Protein receptor SorLA.</title>
        <authorList>
            <person name="Madsen P."/>
            <person name="Isaksen T.J."/>
            <person name="Siupka P."/>
            <person name="Toth A.E."/>
            <person name="Nyegaard M."/>
            <person name="Gustafsen C."/>
            <person name="Nielsen M.S."/>
        </authorList>
    </citation>
    <scope>INTERACTION WITH GGA1 AND HSPA12A</scope>
    <scope>MUTAGENESIS OF 2190-ASP-ASP-2191; 2194-GLU--ASP-2198; 2203-THR-GLY-2204; 2205-PHE-SER-2206; 2207-ASP-ASP-2208 AND 2209-VAL-PRO-2210</scope>
</reference>
<reference key="42">
    <citation type="submission" date="2006-10" db="PDB data bank">
        <title>Solution structure of the second FN3 domain of human SORLA/LR11.</title>
        <authorList>
            <consortium name="RIKEN structural genomics initiative (RSGI)"/>
        </authorList>
    </citation>
    <scope>STRUCTURE BY NMR OF 1651-1745</scope>
</reference>
<reference key="43">
    <citation type="journal article" date="2010" name="Traffic">
        <title>GGA autoinhibition revisited.</title>
        <authorList>
            <person name="Cramer J.F."/>
            <person name="Gustafsen C."/>
            <person name="Behrens M.A."/>
            <person name="Oliveira C.L."/>
            <person name="Pedersen J.S."/>
            <person name="Madsen P."/>
            <person name="Petersen C.M."/>
            <person name="Thirup S.S."/>
        </authorList>
    </citation>
    <scope>X-RAY CRYSTALLOGRAPHY (1.7 ANGSTROMS) OF 2202-2214 IN COMPLEX WITH GGA1</scope>
    <scope>INTERACTION WITH GGA1</scope>
</reference>
<reference key="44">
    <citation type="journal article" date="2006" name="Science">
        <title>The consensus coding sequences of human breast and colorectal cancers.</title>
        <authorList>
            <person name="Sjoeblom T."/>
            <person name="Jones S."/>
            <person name="Wood L.D."/>
            <person name="Parsons D.W."/>
            <person name="Lin J."/>
            <person name="Barber T.D."/>
            <person name="Mandelker D."/>
            <person name="Leary R.J."/>
            <person name="Ptak J."/>
            <person name="Silliman N."/>
            <person name="Szabo S."/>
            <person name="Buckhaults P."/>
            <person name="Farrell C."/>
            <person name="Meeh P."/>
            <person name="Markowitz S.D."/>
            <person name="Willis J."/>
            <person name="Dawson D."/>
            <person name="Willson J.K.V."/>
            <person name="Gazdar A.F."/>
            <person name="Hartigan J."/>
            <person name="Wu L."/>
            <person name="Liu C."/>
            <person name="Parmigiani G."/>
            <person name="Park B.H."/>
            <person name="Bachman K.E."/>
            <person name="Papadopoulos N."/>
            <person name="Vogelstein B."/>
            <person name="Kinzler K.W."/>
            <person name="Velculescu V.E."/>
        </authorList>
    </citation>
    <scope>VARIANTS [LARGE SCALE ANALYSIS] SER-120; LEU-1581 AND VAL-1972</scope>
</reference>
<reference key="45">
    <citation type="journal article" date="2008" name="Hum. Mutat.">
        <title>SORL1 is genetically associated with increased risk for late-onset Alzheimer disease in the Belgian population.</title>
        <authorList>
            <person name="Bettens K."/>
            <person name="Brouwers N."/>
            <person name="Engelborghs S."/>
            <person name="De Deyn P.P."/>
            <person name="Van Broeckhoven C."/>
            <person name="Sleegers K."/>
        </authorList>
    </citation>
    <scope>POSSIBLE ASSOCIATION WITH SUSCEPTIBILITY TO LATE-ONSET ALZHEIMER DISEASE</scope>
    <scope>VARIANT THR-528</scope>
</reference>
<reference key="46">
    <citation type="journal article" date="2012" name="Mol. Psychiatry">
        <title>High frequency of potentially pathogenic SORL1 mutations in autosomal dominant early-onset Alzheimer disease.</title>
        <authorList>
            <consortium name="PHRC GMAJ Collaborators"/>
            <person name="Pottier C."/>
            <person name="Hannequin D."/>
            <person name="Coutant S."/>
            <person name="Rovelet-Lecrux A."/>
            <person name="Wallon D."/>
            <person name="Rousseau S."/>
            <person name="Legallic S."/>
            <person name="Paquet C."/>
            <person name="Bombois S."/>
            <person name="Pariente J."/>
            <person name="Thomas-Anterion C."/>
            <person name="Michon A."/>
            <person name="Croisile B."/>
            <person name="Etcharry-Bouyx F."/>
            <person name="Berr C."/>
            <person name="Dartigues J.F."/>
            <person name="Amouyel P."/>
            <person name="Dauchel H."/>
            <person name="Boutoleau-Bretonniere C."/>
            <person name="Thauvin C."/>
            <person name="Frebourg T."/>
            <person name="Lambert J.C."/>
            <person name="Campion D."/>
        </authorList>
    </citation>
    <scope>VARIANTS AD CYS-141; ARG-511; SER-924; SER-1358 AND ASP-1681</scope>
</reference>
<keyword id="KW-0002">3D-structure</keyword>
<keyword id="KW-0026">Alzheimer disease</keyword>
<keyword id="KW-1008">Amyloidosis</keyword>
<keyword id="KW-1003">Cell membrane</keyword>
<keyword id="KW-0165">Cleavage on pair of basic residues</keyword>
<keyword id="KW-0968">Cytoplasmic vesicle</keyword>
<keyword id="KW-0903">Direct protein sequencing</keyword>
<keyword id="KW-0225">Disease variant</keyword>
<keyword id="KW-1015">Disulfide bond</keyword>
<keyword id="KW-0245">EGF-like domain</keyword>
<keyword id="KW-0254">Endocytosis</keyword>
<keyword id="KW-0256">Endoplasmic reticulum</keyword>
<keyword id="KW-0967">Endosome</keyword>
<keyword id="KW-0325">Glycoprotein</keyword>
<keyword id="KW-0333">Golgi apparatus</keyword>
<keyword id="KW-0472">Membrane</keyword>
<keyword id="KW-0523">Neurodegeneration</keyword>
<keyword id="KW-0597">Phosphoprotein</keyword>
<keyword id="KW-1267">Proteomics identification</keyword>
<keyword id="KW-0675">Receptor</keyword>
<keyword id="KW-1185">Reference proteome</keyword>
<keyword id="KW-0677">Repeat</keyword>
<keyword id="KW-0964">Secreted</keyword>
<keyword id="KW-0732">Signal</keyword>
<keyword id="KW-0812">Transmembrane</keyword>
<keyword id="KW-1133">Transmembrane helix</keyword>
<keyword id="KW-0813">Transport</keyword>
<protein>
    <recommendedName>
        <fullName>Sortilin-related receptor</fullName>
    </recommendedName>
    <alternativeName>
        <fullName>Low-density lipoprotein receptor relative with 11 ligand-binding repeats</fullName>
        <shortName>LDLR relative with 11 ligand-binding repeats</shortName>
        <shortName evidence="46">LR11</shortName>
    </alternativeName>
    <alternativeName>
        <fullName evidence="48">SorLA-1</fullName>
    </alternativeName>
    <alternativeName>
        <fullName>Sorting protein-related receptor containing LDLR class A repeats</fullName>
        <shortName evidence="47">SorLA</shortName>
    </alternativeName>
</protein>
<accession>Q92673</accession>
<accession>B2RNX7</accession>
<accession>Q92856</accession>
<organism>
    <name type="scientific">Homo sapiens</name>
    <name type="common">Human</name>
    <dbReference type="NCBI Taxonomy" id="9606"/>
    <lineage>
        <taxon>Eukaryota</taxon>
        <taxon>Metazoa</taxon>
        <taxon>Chordata</taxon>
        <taxon>Craniata</taxon>
        <taxon>Vertebrata</taxon>
        <taxon>Euteleostomi</taxon>
        <taxon>Mammalia</taxon>
        <taxon>Eutheria</taxon>
        <taxon>Euarchontoglires</taxon>
        <taxon>Primates</taxon>
        <taxon>Haplorrhini</taxon>
        <taxon>Catarrhini</taxon>
        <taxon>Hominidae</taxon>
        <taxon>Homo</taxon>
    </lineage>
</organism>
<dbReference type="EMBL" id="Y08110">
    <property type="protein sequence ID" value="CAA69325.1"/>
    <property type="molecule type" value="mRNA"/>
</dbReference>
<dbReference type="EMBL" id="U60975">
    <property type="protein sequence ID" value="AAC50891.2"/>
    <property type="molecule type" value="mRNA"/>
</dbReference>
<dbReference type="EMBL" id="AP000664">
    <property type="status" value="NOT_ANNOTATED_CDS"/>
    <property type="molecule type" value="Genomic_DNA"/>
</dbReference>
<dbReference type="EMBL" id="AP000977">
    <property type="status" value="NOT_ANNOTATED_CDS"/>
    <property type="molecule type" value="Genomic_DNA"/>
</dbReference>
<dbReference type="EMBL" id="CH471065">
    <property type="protein sequence ID" value="EAW67525.1"/>
    <property type="molecule type" value="Genomic_DNA"/>
</dbReference>
<dbReference type="EMBL" id="BC137171">
    <property type="protein sequence ID" value="AAI37172.1"/>
    <property type="molecule type" value="mRNA"/>
</dbReference>
<dbReference type="CCDS" id="CCDS8436.1"/>
<dbReference type="RefSeq" id="NP_003096.2">
    <property type="nucleotide sequence ID" value="NM_003105.6"/>
</dbReference>
<dbReference type="PDB" id="2DM4">
    <property type="method" value="NMR"/>
    <property type="chains" value="A=1651-1745"/>
</dbReference>
<dbReference type="PDB" id="3G2S">
    <property type="method" value="X-ray"/>
    <property type="resolution" value="1.70 A"/>
    <property type="chains" value="C/D=2202-2214"/>
</dbReference>
<dbReference type="PDB" id="3G2T">
    <property type="method" value="X-ray"/>
    <property type="resolution" value="2.00 A"/>
    <property type="chains" value="C/D=2202-2214"/>
</dbReference>
<dbReference type="PDB" id="3WSX">
    <property type="method" value="X-ray"/>
    <property type="resolution" value="2.35 A"/>
    <property type="chains" value="A=29-753"/>
</dbReference>
<dbReference type="PDB" id="3WSY">
    <property type="method" value="X-ray"/>
    <property type="resolution" value="3.11 A"/>
    <property type="chains" value="A=86-753, C=42-56"/>
</dbReference>
<dbReference type="PDB" id="3WSZ">
    <property type="method" value="X-ray"/>
    <property type="resolution" value="3.20 A"/>
    <property type="chains" value="A=86-753"/>
</dbReference>
<dbReference type="PDB" id="7VT0">
    <property type="method" value="EM"/>
    <property type="resolution" value="3.40 A"/>
    <property type="chains" value="A/B=89-752"/>
</dbReference>
<dbReference type="PDBsum" id="2DM4"/>
<dbReference type="PDBsum" id="3G2S"/>
<dbReference type="PDBsum" id="3G2T"/>
<dbReference type="PDBsum" id="3WSX"/>
<dbReference type="PDBsum" id="3WSY"/>
<dbReference type="PDBsum" id="3WSZ"/>
<dbReference type="PDBsum" id="7VT0"/>
<dbReference type="BMRB" id="Q92673"/>
<dbReference type="EMDB" id="EMD-32117"/>
<dbReference type="SMR" id="Q92673"/>
<dbReference type="BioGRID" id="112536">
    <property type="interactions" value="156"/>
</dbReference>
<dbReference type="CORUM" id="Q92673"/>
<dbReference type="DIP" id="DIP-41229N"/>
<dbReference type="FunCoup" id="Q92673">
    <property type="interactions" value="1351"/>
</dbReference>
<dbReference type="IntAct" id="Q92673">
    <property type="interactions" value="135"/>
</dbReference>
<dbReference type="MINT" id="Q92673"/>
<dbReference type="STRING" id="9606.ENSP00000260197"/>
<dbReference type="TCDB" id="9.B.87.1.17">
    <property type="family name" value="the selenoprotein p receptor (selp-receptor) family"/>
</dbReference>
<dbReference type="GlyConnect" id="1766">
    <property type="glycosylation" value="17 N-Linked glycans (11 sites)"/>
</dbReference>
<dbReference type="GlyCosmos" id="Q92673">
    <property type="glycosylation" value="35 sites, 18 glycans"/>
</dbReference>
<dbReference type="GlyGen" id="Q92673">
    <property type="glycosylation" value="44 sites, 94 N-linked glycans (19 sites), 4 O-linked glycans (9 sites)"/>
</dbReference>
<dbReference type="iPTMnet" id="Q92673"/>
<dbReference type="PhosphoSitePlus" id="Q92673"/>
<dbReference type="SwissPalm" id="Q92673"/>
<dbReference type="BioMuta" id="SORL1"/>
<dbReference type="DMDM" id="296452912"/>
<dbReference type="jPOST" id="Q92673"/>
<dbReference type="MassIVE" id="Q92673"/>
<dbReference type="PaxDb" id="9606-ENSP00000260197"/>
<dbReference type="PeptideAtlas" id="Q92673"/>
<dbReference type="ProteomicsDB" id="75402"/>
<dbReference type="Pumba" id="Q92673"/>
<dbReference type="ABCD" id="Q92673">
    <property type="antibodies" value="1 sequenced antibody"/>
</dbReference>
<dbReference type="Antibodypedia" id="32786">
    <property type="antibodies" value="273 antibodies from 38 providers"/>
</dbReference>
<dbReference type="DNASU" id="6653"/>
<dbReference type="Ensembl" id="ENST00000260197.12">
    <property type="protein sequence ID" value="ENSP00000260197.6"/>
    <property type="gene ID" value="ENSG00000137642.13"/>
</dbReference>
<dbReference type="GeneID" id="6653"/>
<dbReference type="KEGG" id="hsa:6653"/>
<dbReference type="MANE-Select" id="ENST00000260197.12">
    <property type="protein sequence ID" value="ENSP00000260197.6"/>
    <property type="RefSeq nucleotide sequence ID" value="NM_003105.6"/>
    <property type="RefSeq protein sequence ID" value="NP_003096.2"/>
</dbReference>
<dbReference type="UCSC" id="uc001pxx.4">
    <property type="organism name" value="human"/>
</dbReference>
<dbReference type="AGR" id="HGNC:11185"/>
<dbReference type="CTD" id="6653"/>
<dbReference type="DisGeNET" id="6653"/>
<dbReference type="GeneCards" id="SORL1"/>
<dbReference type="HGNC" id="HGNC:11185">
    <property type="gene designation" value="SORL1"/>
</dbReference>
<dbReference type="HPA" id="ENSG00000137642">
    <property type="expression patterns" value="Low tissue specificity"/>
</dbReference>
<dbReference type="MalaCards" id="SORL1"/>
<dbReference type="MIM" id="104300">
    <property type="type" value="phenotype"/>
</dbReference>
<dbReference type="MIM" id="602005">
    <property type="type" value="gene"/>
</dbReference>
<dbReference type="neXtProt" id="NX_Q92673"/>
<dbReference type="NIAGADS" id="ENSG00000137642"/>
<dbReference type="OpenTargets" id="ENSG00000137642"/>
<dbReference type="Orphanet" id="1020">
    <property type="disease" value="Early-onset autosomal dominant Alzheimer disease"/>
</dbReference>
<dbReference type="PharmGKB" id="PA36022"/>
<dbReference type="VEuPathDB" id="HostDB:ENSG00000137642"/>
<dbReference type="eggNOG" id="KOG1215">
    <property type="taxonomic scope" value="Eukaryota"/>
</dbReference>
<dbReference type="eggNOG" id="KOG3511">
    <property type="taxonomic scope" value="Eukaryota"/>
</dbReference>
<dbReference type="GeneTree" id="ENSGT01030000234563"/>
<dbReference type="HOGENOM" id="CLU_001389_0_0_1"/>
<dbReference type="InParanoid" id="Q92673"/>
<dbReference type="OMA" id="LCPDGME"/>
<dbReference type="OrthoDB" id="443634at2759"/>
<dbReference type="PAN-GO" id="Q92673">
    <property type="GO annotations" value="5 GO annotations based on evolutionary models"/>
</dbReference>
<dbReference type="PhylomeDB" id="Q92673"/>
<dbReference type="TreeFam" id="TF324918"/>
<dbReference type="PathwayCommons" id="Q92673"/>
<dbReference type="Reactome" id="R-HSA-977225">
    <property type="pathway name" value="Amyloid fiber formation"/>
</dbReference>
<dbReference type="SignaLink" id="Q92673"/>
<dbReference type="SIGNOR" id="Q92673"/>
<dbReference type="BioGRID-ORCS" id="6653">
    <property type="hits" value="18 hits in 1151 CRISPR screens"/>
</dbReference>
<dbReference type="ChiTaRS" id="SORL1">
    <property type="organism name" value="human"/>
</dbReference>
<dbReference type="EvolutionaryTrace" id="Q92673"/>
<dbReference type="GenomeRNAi" id="6653"/>
<dbReference type="Pharos" id="Q92673">
    <property type="development level" value="Tbio"/>
</dbReference>
<dbReference type="PRO" id="PR:Q92673"/>
<dbReference type="Proteomes" id="UP000005640">
    <property type="component" value="Chromosome 11"/>
</dbReference>
<dbReference type="RNAct" id="Q92673">
    <property type="molecule type" value="protein"/>
</dbReference>
<dbReference type="Bgee" id="ENSG00000137642">
    <property type="expression patterns" value="Expressed in frontal pole and 206 other cell types or tissues"/>
</dbReference>
<dbReference type="ExpressionAtlas" id="Q92673">
    <property type="expression patterns" value="baseline and differential"/>
</dbReference>
<dbReference type="GO" id="GO:0009986">
    <property type="term" value="C:cell surface"/>
    <property type="evidence" value="ECO:0000314"/>
    <property type="project" value="UniProtKB"/>
</dbReference>
<dbReference type="GO" id="GO:0005829">
    <property type="term" value="C:cytosol"/>
    <property type="evidence" value="ECO:0007669"/>
    <property type="project" value="GOC"/>
</dbReference>
<dbReference type="GO" id="GO:0005769">
    <property type="term" value="C:early endosome"/>
    <property type="evidence" value="ECO:0000314"/>
    <property type="project" value="UniProtKB"/>
</dbReference>
<dbReference type="GO" id="GO:0031901">
    <property type="term" value="C:early endosome membrane"/>
    <property type="evidence" value="ECO:0000314"/>
    <property type="project" value="UniProt"/>
</dbReference>
<dbReference type="GO" id="GO:0005783">
    <property type="term" value="C:endoplasmic reticulum"/>
    <property type="evidence" value="ECO:0000314"/>
    <property type="project" value="UniProtKB"/>
</dbReference>
<dbReference type="GO" id="GO:0005789">
    <property type="term" value="C:endoplasmic reticulum membrane"/>
    <property type="evidence" value="ECO:0007669"/>
    <property type="project" value="UniProtKB-SubCell"/>
</dbReference>
<dbReference type="GO" id="GO:0005768">
    <property type="term" value="C:endosome"/>
    <property type="evidence" value="ECO:0000314"/>
    <property type="project" value="UniProtKB"/>
</dbReference>
<dbReference type="GO" id="GO:0010008">
    <property type="term" value="C:endosome membrane"/>
    <property type="evidence" value="ECO:0000304"/>
    <property type="project" value="Reactome"/>
</dbReference>
<dbReference type="GO" id="GO:0070062">
    <property type="term" value="C:extracellular exosome"/>
    <property type="evidence" value="ECO:0007005"/>
    <property type="project" value="UniProtKB"/>
</dbReference>
<dbReference type="GO" id="GO:0005615">
    <property type="term" value="C:extracellular space"/>
    <property type="evidence" value="ECO:0000314"/>
    <property type="project" value="UniProtKB"/>
</dbReference>
<dbReference type="GO" id="GO:0005794">
    <property type="term" value="C:Golgi apparatus"/>
    <property type="evidence" value="ECO:0000314"/>
    <property type="project" value="UniProtKB"/>
</dbReference>
<dbReference type="GO" id="GO:0031985">
    <property type="term" value="C:Golgi cisterna"/>
    <property type="evidence" value="ECO:0000314"/>
    <property type="project" value="Alzheimers_University_of_Toronto"/>
</dbReference>
<dbReference type="GO" id="GO:0000139">
    <property type="term" value="C:Golgi membrane"/>
    <property type="evidence" value="ECO:0000304"/>
    <property type="project" value="Reactome"/>
</dbReference>
<dbReference type="GO" id="GO:0016020">
    <property type="term" value="C:membrane"/>
    <property type="evidence" value="ECO:0000314"/>
    <property type="project" value="UniProtKB"/>
</dbReference>
<dbReference type="GO" id="GO:0005771">
    <property type="term" value="C:multivesicular body"/>
    <property type="evidence" value="ECO:0000314"/>
    <property type="project" value="UniProtKB"/>
</dbReference>
<dbReference type="GO" id="GO:0032585">
    <property type="term" value="C:multivesicular body membrane"/>
    <property type="evidence" value="ECO:0007669"/>
    <property type="project" value="UniProtKB-SubCell"/>
</dbReference>
<dbReference type="GO" id="GO:0043025">
    <property type="term" value="C:neuronal cell body"/>
    <property type="evidence" value="ECO:0007669"/>
    <property type="project" value="Ensembl"/>
</dbReference>
<dbReference type="GO" id="GO:0005641">
    <property type="term" value="C:nuclear envelope lumen"/>
    <property type="evidence" value="ECO:0000314"/>
    <property type="project" value="Alzheimers_University_of_Toronto"/>
</dbReference>
<dbReference type="GO" id="GO:0097356">
    <property type="term" value="C:perinucleolar compartment"/>
    <property type="evidence" value="ECO:0007669"/>
    <property type="project" value="Ensembl"/>
</dbReference>
<dbReference type="GO" id="GO:0005886">
    <property type="term" value="C:plasma membrane"/>
    <property type="evidence" value="ECO:0000314"/>
    <property type="project" value="UniProtKB"/>
</dbReference>
<dbReference type="GO" id="GO:0055037">
    <property type="term" value="C:recycling endosome"/>
    <property type="evidence" value="ECO:0000315"/>
    <property type="project" value="Alzheimers_University_of_Toronto"/>
</dbReference>
<dbReference type="GO" id="GO:0055038">
    <property type="term" value="C:recycling endosome membrane"/>
    <property type="evidence" value="ECO:0007669"/>
    <property type="project" value="UniProtKB-SubCell"/>
</dbReference>
<dbReference type="GO" id="GO:0005802">
    <property type="term" value="C:trans-Golgi network"/>
    <property type="evidence" value="ECO:0000314"/>
    <property type="project" value="Alzheimers_University_of_Toronto"/>
</dbReference>
<dbReference type="GO" id="GO:0030658">
    <property type="term" value="C:transport vesicle membrane"/>
    <property type="evidence" value="ECO:0007669"/>
    <property type="project" value="UniProtKB-SubCell"/>
</dbReference>
<dbReference type="GO" id="GO:0001540">
    <property type="term" value="F:amyloid-beta binding"/>
    <property type="evidence" value="ECO:0000314"/>
    <property type="project" value="Alzheimers_University_of_Toronto"/>
</dbReference>
<dbReference type="GO" id="GO:0019828">
    <property type="term" value="F:aspartic-type endopeptidase inhibitor activity"/>
    <property type="evidence" value="ECO:0000314"/>
    <property type="project" value="Alzheimers_University_of_Toronto"/>
</dbReference>
<dbReference type="GO" id="GO:0030169">
    <property type="term" value="F:low-density lipoprotein particle binding"/>
    <property type="evidence" value="ECO:0000353"/>
    <property type="project" value="BHF-UCL"/>
</dbReference>
<dbReference type="GO" id="GO:0005041">
    <property type="term" value="F:low-density lipoprotein particle receptor activity"/>
    <property type="evidence" value="ECO:0000304"/>
    <property type="project" value="ARUK-UCL"/>
</dbReference>
<dbReference type="GO" id="GO:0042923">
    <property type="term" value="F:neuropeptide binding"/>
    <property type="evidence" value="ECO:0000353"/>
    <property type="project" value="UniProtKB"/>
</dbReference>
<dbReference type="GO" id="GO:0140318">
    <property type="term" value="F:protein transporter activity"/>
    <property type="evidence" value="ECO:0000314"/>
    <property type="project" value="Alzheimers_University_of_Toronto"/>
</dbReference>
<dbReference type="GO" id="GO:0031267">
    <property type="term" value="F:small GTPase binding"/>
    <property type="evidence" value="ECO:0000353"/>
    <property type="project" value="Alzheimers_University_of_Toronto"/>
</dbReference>
<dbReference type="GO" id="GO:0004888">
    <property type="term" value="F:transmembrane signaling receptor activity"/>
    <property type="evidence" value="ECO:0000314"/>
    <property type="project" value="UniProtKB"/>
</dbReference>
<dbReference type="GO" id="GO:1990845">
    <property type="term" value="P:adaptive thermogenesis"/>
    <property type="evidence" value="ECO:0000250"/>
    <property type="project" value="UniProtKB"/>
</dbReference>
<dbReference type="GO" id="GO:0016477">
    <property type="term" value="P:cell migration"/>
    <property type="evidence" value="ECO:0007669"/>
    <property type="project" value="Ensembl"/>
</dbReference>
<dbReference type="GO" id="GO:0002024">
    <property type="term" value="P:diet induced thermogenesis"/>
    <property type="evidence" value="ECO:0000250"/>
    <property type="project" value="UniProtKB"/>
</dbReference>
<dbReference type="GO" id="GO:0099638">
    <property type="term" value="P:endosome to plasma membrane protein transport"/>
    <property type="evidence" value="ECO:0007669"/>
    <property type="project" value="Ensembl"/>
</dbReference>
<dbReference type="GO" id="GO:0038020">
    <property type="term" value="P:insulin receptor recycling"/>
    <property type="evidence" value="ECO:0000314"/>
    <property type="project" value="UniProtKB"/>
</dbReference>
<dbReference type="GO" id="GO:1902992">
    <property type="term" value="P:negative regulation of amyloid precursor protein catabolic process"/>
    <property type="evidence" value="ECO:0000314"/>
    <property type="project" value="Alzheimers_University_of_Toronto"/>
</dbReference>
<dbReference type="GO" id="GO:1902430">
    <property type="term" value="P:negative regulation of amyloid-beta formation"/>
    <property type="evidence" value="ECO:0000314"/>
    <property type="project" value="Alzheimers_University_of_Toronto"/>
</dbReference>
<dbReference type="GO" id="GO:0030514">
    <property type="term" value="P:negative regulation of BMP signaling pathway"/>
    <property type="evidence" value="ECO:0000250"/>
    <property type="project" value="UniProtKB"/>
</dbReference>
<dbReference type="GO" id="GO:1902997">
    <property type="term" value="P:negative regulation of neurofibrillary tangle assembly"/>
    <property type="evidence" value="ECO:0000250"/>
    <property type="project" value="Alzheimers_University_of_Toronto"/>
</dbReference>
<dbReference type="GO" id="GO:0050768">
    <property type="term" value="P:negative regulation of neurogenesis"/>
    <property type="evidence" value="ECO:0000250"/>
    <property type="project" value="Alzheimers_University_of_Toronto"/>
</dbReference>
<dbReference type="GO" id="GO:0031333">
    <property type="term" value="P:negative regulation of protein-containing complex assembly"/>
    <property type="evidence" value="ECO:0000315"/>
    <property type="project" value="Alzheimers_University_of_Toronto"/>
</dbReference>
<dbReference type="GO" id="GO:0010897">
    <property type="term" value="P:negative regulation of triglyceride catabolic process"/>
    <property type="evidence" value="ECO:0000250"/>
    <property type="project" value="UniProtKB"/>
</dbReference>
<dbReference type="GO" id="GO:0007218">
    <property type="term" value="P:neuropeptide signaling pathway"/>
    <property type="evidence" value="ECO:0000314"/>
    <property type="project" value="UniProtKB"/>
</dbReference>
<dbReference type="GO" id="GO:1904179">
    <property type="term" value="P:positive regulation of adipose tissue development"/>
    <property type="evidence" value="ECO:0000314"/>
    <property type="project" value="UniProtKB"/>
</dbReference>
<dbReference type="GO" id="GO:1902955">
    <property type="term" value="P:positive regulation of early endosome to recycling endosome transport"/>
    <property type="evidence" value="ECO:0000315"/>
    <property type="project" value="Alzheimers_University_of_Toronto"/>
</dbReference>
<dbReference type="GO" id="GO:2001137">
    <property type="term" value="P:positive regulation of endocytic recycling"/>
    <property type="evidence" value="ECO:0000315"/>
    <property type="project" value="Alzheimers_University_of_Toronto"/>
</dbReference>
<dbReference type="GO" id="GO:1902953">
    <property type="term" value="P:positive regulation of ER to Golgi vesicle-mediated transport"/>
    <property type="evidence" value="ECO:0000315"/>
    <property type="project" value="Alzheimers_University_of_Toronto"/>
</dbReference>
<dbReference type="GO" id="GO:1900168">
    <property type="term" value="P:positive regulation of glial cell-derived neurotrophic factor production"/>
    <property type="evidence" value="ECO:0000314"/>
    <property type="project" value="UniProtKB"/>
</dbReference>
<dbReference type="GO" id="GO:0046628">
    <property type="term" value="P:positive regulation of insulin receptor signaling pathway"/>
    <property type="evidence" value="ECO:0000314"/>
    <property type="project" value="UniProtKB"/>
</dbReference>
<dbReference type="GO" id="GO:0045732">
    <property type="term" value="P:positive regulation of protein catabolic process"/>
    <property type="evidence" value="ECO:0000314"/>
    <property type="project" value="Alzheimers_University_of_Toronto"/>
</dbReference>
<dbReference type="GO" id="GO:0070863">
    <property type="term" value="P:positive regulation of protein exit from endoplasmic reticulum"/>
    <property type="evidence" value="ECO:0000315"/>
    <property type="project" value="Alzheimers_University_of_Toronto"/>
</dbReference>
<dbReference type="GO" id="GO:1902966">
    <property type="term" value="P:positive regulation of protein localization to early endosome"/>
    <property type="evidence" value="ECO:0000315"/>
    <property type="project" value="Alzheimers_University_of_Toronto"/>
</dbReference>
<dbReference type="GO" id="GO:0006892">
    <property type="term" value="P:post-Golgi vesicle-mediated transport"/>
    <property type="evidence" value="ECO:0000314"/>
    <property type="project" value="Alzheimers_University_of_Toronto"/>
</dbReference>
<dbReference type="GO" id="GO:0034067">
    <property type="term" value="P:protein localization to Golgi apparatus"/>
    <property type="evidence" value="ECO:0000314"/>
    <property type="project" value="Alzheimers_University_of_Toronto"/>
</dbReference>
<dbReference type="GO" id="GO:0045053">
    <property type="term" value="P:protein retention in Golgi apparatus"/>
    <property type="evidence" value="ECO:0000314"/>
    <property type="project" value="Alzheimers_University_of_Toronto"/>
</dbReference>
<dbReference type="GO" id="GO:0006605">
    <property type="term" value="P:protein targeting"/>
    <property type="evidence" value="ECO:0000314"/>
    <property type="project" value="UniProtKB"/>
</dbReference>
<dbReference type="GO" id="GO:0006622">
    <property type="term" value="P:protein targeting to lysosome"/>
    <property type="evidence" value="ECO:0000314"/>
    <property type="project" value="Alzheimers_University_of_Toronto"/>
</dbReference>
<dbReference type="GO" id="GO:0006898">
    <property type="term" value="P:receptor-mediated endocytosis"/>
    <property type="evidence" value="ECO:0000314"/>
    <property type="project" value="UniProtKB"/>
</dbReference>
<dbReference type="GO" id="GO:0014910">
    <property type="term" value="P:regulation of smooth muscle cell migration"/>
    <property type="evidence" value="ECO:0000314"/>
    <property type="project" value="UniProtKB"/>
</dbReference>
<dbReference type="GO" id="GO:0042147">
    <property type="term" value="P:retrograde transport, endosome to Golgi"/>
    <property type="evidence" value="ECO:0000314"/>
    <property type="project" value="UniProt"/>
</dbReference>
<dbReference type="CDD" id="cd00063">
    <property type="entry name" value="FN3"/>
    <property type="match status" value="5"/>
</dbReference>
<dbReference type="CDD" id="cd00112">
    <property type="entry name" value="LDLa"/>
    <property type="match status" value="11"/>
</dbReference>
<dbReference type="FunFam" id="4.10.400.10:FF:000006">
    <property type="entry name" value="Putative low-density lipoprotein receptor"/>
    <property type="match status" value="1"/>
</dbReference>
<dbReference type="FunFam" id="2.130.10.10:FF:000303">
    <property type="entry name" value="Sortilin related receptor 1"/>
    <property type="match status" value="1"/>
</dbReference>
<dbReference type="FunFam" id="2.60.40.10:FF:000404">
    <property type="entry name" value="Sortilin related receptor 1"/>
    <property type="match status" value="1"/>
</dbReference>
<dbReference type="FunFam" id="2.60.40.10:FF:000416">
    <property type="entry name" value="Sortilin related receptor 1"/>
    <property type="match status" value="1"/>
</dbReference>
<dbReference type="FunFam" id="2.60.40.10:FF:000461">
    <property type="entry name" value="Sortilin related receptor 1"/>
    <property type="match status" value="1"/>
</dbReference>
<dbReference type="FunFam" id="2.60.40.10:FF:001616">
    <property type="entry name" value="Sortilin related receptor 1"/>
    <property type="match status" value="1"/>
</dbReference>
<dbReference type="FunFam" id="4.10.400.10:FF:000027">
    <property type="entry name" value="Sortilin related receptor 1"/>
    <property type="match status" value="1"/>
</dbReference>
<dbReference type="FunFam" id="4.10.400.10:FF:000030">
    <property type="entry name" value="Sortilin related receptor 1"/>
    <property type="match status" value="1"/>
</dbReference>
<dbReference type="FunFam" id="4.10.400.10:FF:000036">
    <property type="entry name" value="Sortilin related receptor 1"/>
    <property type="match status" value="1"/>
</dbReference>
<dbReference type="FunFam" id="4.10.400.10:FF:000037">
    <property type="entry name" value="Sortilin related receptor 1"/>
    <property type="match status" value="1"/>
</dbReference>
<dbReference type="FunFam" id="4.10.400.10:FF:000039">
    <property type="entry name" value="Sortilin related receptor 1"/>
    <property type="match status" value="1"/>
</dbReference>
<dbReference type="FunFam" id="4.10.400.10:FF:000041">
    <property type="entry name" value="Sortilin related receptor 1"/>
    <property type="match status" value="1"/>
</dbReference>
<dbReference type="FunFam" id="4.10.400.10:FF:000048">
    <property type="entry name" value="Sortilin related receptor 1"/>
    <property type="match status" value="1"/>
</dbReference>
<dbReference type="FunFam" id="4.10.400.10:FF:000052">
    <property type="entry name" value="Sortilin related receptor 1"/>
    <property type="match status" value="1"/>
</dbReference>
<dbReference type="FunFam" id="4.10.400.10:FF:000060">
    <property type="entry name" value="Sortilin related receptor 1"/>
    <property type="match status" value="1"/>
</dbReference>
<dbReference type="FunFam" id="2.10.70.80:FF:000002">
    <property type="entry name" value="Sortilin-related receptor isoform A"/>
    <property type="match status" value="1"/>
</dbReference>
<dbReference type="FunFam" id="2.120.10.30:FF:000021">
    <property type="entry name" value="Sortilin-related receptor isoform A"/>
    <property type="match status" value="1"/>
</dbReference>
<dbReference type="FunFam" id="3.30.60.270:FF:000002">
    <property type="entry name" value="Sortilin-related receptor isoform A"/>
    <property type="match status" value="1"/>
</dbReference>
<dbReference type="FunFam" id="4.10.400.10:FF:000033">
    <property type="entry name" value="Sortilin-related receptor isoform A"/>
    <property type="match status" value="1"/>
</dbReference>
<dbReference type="Gene3D" id="2.10.70.80">
    <property type="match status" value="1"/>
</dbReference>
<dbReference type="Gene3D" id="3.30.60.270">
    <property type="match status" value="1"/>
</dbReference>
<dbReference type="Gene3D" id="2.60.40.10">
    <property type="entry name" value="Immunoglobulins"/>
    <property type="match status" value="3"/>
</dbReference>
<dbReference type="Gene3D" id="4.10.400.10">
    <property type="entry name" value="Low-density Lipoprotein Receptor"/>
    <property type="match status" value="11"/>
</dbReference>
<dbReference type="Gene3D" id="2.120.10.30">
    <property type="entry name" value="TolB, C-terminal domain"/>
    <property type="match status" value="1"/>
</dbReference>
<dbReference type="Gene3D" id="2.130.10.10">
    <property type="entry name" value="YVTN repeat-like/Quinoprotein amine dehydrogenase"/>
    <property type="match status" value="1"/>
</dbReference>
<dbReference type="InterPro" id="IPR011042">
    <property type="entry name" value="6-blade_b-propeller_TolB-like"/>
</dbReference>
<dbReference type="InterPro" id="IPR003961">
    <property type="entry name" value="FN3_dom"/>
</dbReference>
<dbReference type="InterPro" id="IPR036116">
    <property type="entry name" value="FN3_sf"/>
</dbReference>
<dbReference type="InterPro" id="IPR013783">
    <property type="entry name" value="Ig-like_fold"/>
</dbReference>
<dbReference type="InterPro" id="IPR036055">
    <property type="entry name" value="LDL_receptor-like_sf"/>
</dbReference>
<dbReference type="InterPro" id="IPR023415">
    <property type="entry name" value="LDLR_class-A_CS"/>
</dbReference>
<dbReference type="InterPro" id="IPR000033">
    <property type="entry name" value="LDLR_classB_rpt"/>
</dbReference>
<dbReference type="InterPro" id="IPR002172">
    <property type="entry name" value="LDrepeatLR_classA_rpt"/>
</dbReference>
<dbReference type="InterPro" id="IPR031777">
    <property type="entry name" value="Sortilin_C"/>
</dbReference>
<dbReference type="InterPro" id="IPR031778">
    <property type="entry name" value="Sortilin_N"/>
</dbReference>
<dbReference type="InterPro" id="IPR006581">
    <property type="entry name" value="VPS10"/>
</dbReference>
<dbReference type="InterPro" id="IPR050310">
    <property type="entry name" value="VPS10-sortilin"/>
</dbReference>
<dbReference type="InterPro" id="IPR015943">
    <property type="entry name" value="WD40/YVTN_repeat-like_dom_sf"/>
</dbReference>
<dbReference type="PANTHER" id="PTHR12106">
    <property type="entry name" value="SORTILIN RELATED"/>
    <property type="match status" value="1"/>
</dbReference>
<dbReference type="PANTHER" id="PTHR12106:SF27">
    <property type="entry name" value="SORTILIN-RELATED RECEPTOR"/>
    <property type="match status" value="1"/>
</dbReference>
<dbReference type="Pfam" id="PF00041">
    <property type="entry name" value="fn3"/>
    <property type="match status" value="3"/>
</dbReference>
<dbReference type="Pfam" id="PF00057">
    <property type="entry name" value="Ldl_recept_a"/>
    <property type="match status" value="10"/>
</dbReference>
<dbReference type="Pfam" id="PF00058">
    <property type="entry name" value="Ldl_recept_b"/>
    <property type="match status" value="2"/>
</dbReference>
<dbReference type="Pfam" id="PF15902">
    <property type="entry name" value="Sortilin-Vps10"/>
    <property type="match status" value="1"/>
</dbReference>
<dbReference type="Pfam" id="PF15901">
    <property type="entry name" value="Sortilin_C"/>
    <property type="match status" value="1"/>
</dbReference>
<dbReference type="PRINTS" id="PR00261">
    <property type="entry name" value="LDLRECEPTOR"/>
</dbReference>
<dbReference type="SMART" id="SM00060">
    <property type="entry name" value="FN3"/>
    <property type="match status" value="6"/>
</dbReference>
<dbReference type="SMART" id="SM00192">
    <property type="entry name" value="LDLa"/>
    <property type="match status" value="11"/>
</dbReference>
<dbReference type="SMART" id="SM00135">
    <property type="entry name" value="LY"/>
    <property type="match status" value="5"/>
</dbReference>
<dbReference type="SMART" id="SM00602">
    <property type="entry name" value="VPS10"/>
    <property type="match status" value="1"/>
</dbReference>
<dbReference type="SUPFAM" id="SSF49265">
    <property type="entry name" value="Fibronectin type III"/>
    <property type="match status" value="3"/>
</dbReference>
<dbReference type="SUPFAM" id="SSF57424">
    <property type="entry name" value="LDL receptor-like module"/>
    <property type="match status" value="11"/>
</dbReference>
<dbReference type="SUPFAM" id="SSF110296">
    <property type="entry name" value="Oligoxyloglucan reducing end-specific cellobiohydrolase"/>
    <property type="match status" value="2"/>
</dbReference>
<dbReference type="SUPFAM" id="SSF63825">
    <property type="entry name" value="YWTD domain"/>
    <property type="match status" value="1"/>
</dbReference>
<dbReference type="PROSITE" id="PS01186">
    <property type="entry name" value="EGF_2"/>
    <property type="match status" value="1"/>
</dbReference>
<dbReference type="PROSITE" id="PS50853">
    <property type="entry name" value="FN3"/>
    <property type="match status" value="4"/>
</dbReference>
<dbReference type="PROSITE" id="PS01209">
    <property type="entry name" value="LDLRA_1"/>
    <property type="match status" value="10"/>
</dbReference>
<dbReference type="PROSITE" id="PS50068">
    <property type="entry name" value="LDLRA_2"/>
    <property type="match status" value="11"/>
</dbReference>
<dbReference type="PROSITE" id="PS51120">
    <property type="entry name" value="LDLRB"/>
    <property type="match status" value="5"/>
</dbReference>
<name>SORL_HUMAN</name>